<evidence type="ECO:0000250" key="1">
    <source>
        <dbReference type="UniProtKB" id="P36873"/>
    </source>
</evidence>
<evidence type="ECO:0000250" key="2">
    <source>
        <dbReference type="UniProtKB" id="P62137"/>
    </source>
</evidence>
<evidence type="ECO:0000250" key="3">
    <source>
        <dbReference type="UniProtKB" id="P62139"/>
    </source>
</evidence>
<evidence type="ECO:0000250" key="4">
    <source>
        <dbReference type="UniProtKB" id="Q08209"/>
    </source>
</evidence>
<evidence type="ECO:0000256" key="5">
    <source>
        <dbReference type="SAM" id="MobiDB-lite"/>
    </source>
</evidence>
<evidence type="ECO:0000269" key="6">
    <source>
    </source>
</evidence>
<evidence type="ECO:0000269" key="7">
    <source>
    </source>
</evidence>
<evidence type="ECO:0000269" key="8">
    <source>
    </source>
</evidence>
<evidence type="ECO:0000269" key="9">
    <source>
    </source>
</evidence>
<evidence type="ECO:0000269" key="10">
    <source>
    </source>
</evidence>
<evidence type="ECO:0000269" key="11">
    <source>
    </source>
</evidence>
<evidence type="ECO:0000269" key="12">
    <source>
    </source>
</evidence>
<evidence type="ECO:0000269" key="13">
    <source>
    </source>
</evidence>
<evidence type="ECO:0000269" key="14">
    <source>
    </source>
</evidence>
<evidence type="ECO:0000269" key="15">
    <source>
    </source>
</evidence>
<evidence type="ECO:0000269" key="16">
    <source>
    </source>
</evidence>
<evidence type="ECO:0000269" key="17">
    <source>
    </source>
</evidence>
<evidence type="ECO:0000269" key="18">
    <source>
    </source>
</evidence>
<evidence type="ECO:0000269" key="19">
    <source>
    </source>
</evidence>
<evidence type="ECO:0000269" key="20">
    <source>
    </source>
</evidence>
<evidence type="ECO:0000269" key="21">
    <source>
    </source>
</evidence>
<evidence type="ECO:0000269" key="22">
    <source>
    </source>
</evidence>
<evidence type="ECO:0000269" key="23">
    <source>
    </source>
</evidence>
<evidence type="ECO:0000269" key="24">
    <source>
    </source>
</evidence>
<evidence type="ECO:0000269" key="25">
    <source>
    </source>
</evidence>
<evidence type="ECO:0000269" key="26">
    <source>
    </source>
</evidence>
<evidence type="ECO:0000269" key="27">
    <source>
    </source>
</evidence>
<evidence type="ECO:0000269" key="28">
    <source>
    </source>
</evidence>
<evidence type="ECO:0000269" key="29">
    <source>
    </source>
</evidence>
<evidence type="ECO:0000269" key="30">
    <source>
    </source>
</evidence>
<evidence type="ECO:0000269" key="31">
    <source>
    </source>
</evidence>
<evidence type="ECO:0000269" key="32">
    <source>
    </source>
</evidence>
<evidence type="ECO:0000269" key="33">
    <source>
    </source>
</evidence>
<evidence type="ECO:0000269" key="34">
    <source>
    </source>
</evidence>
<evidence type="ECO:0000269" key="35">
    <source>
    </source>
</evidence>
<evidence type="ECO:0000269" key="36">
    <source>
    </source>
</evidence>
<evidence type="ECO:0000269" key="37">
    <source>
    </source>
</evidence>
<evidence type="ECO:0000269" key="38">
    <source>
    </source>
</evidence>
<evidence type="ECO:0000269" key="39">
    <source>
    </source>
</evidence>
<evidence type="ECO:0000269" key="40">
    <source>
    </source>
</evidence>
<evidence type="ECO:0000269" key="41">
    <source>
    </source>
</evidence>
<evidence type="ECO:0000269" key="42">
    <source>
    </source>
</evidence>
<evidence type="ECO:0000269" key="43">
    <source>
    </source>
</evidence>
<evidence type="ECO:0000269" key="44">
    <source>
    </source>
</evidence>
<evidence type="ECO:0000269" key="45">
    <source>
    </source>
</evidence>
<evidence type="ECO:0000269" key="46">
    <source>
    </source>
</evidence>
<evidence type="ECO:0000269" key="47">
    <source ref="8"/>
</evidence>
<evidence type="ECO:0000303" key="48">
    <source>
    </source>
</evidence>
<evidence type="ECO:0000305" key="49"/>
<evidence type="ECO:0007744" key="50">
    <source>
        <dbReference type="PDB" id="4MOY"/>
    </source>
</evidence>
<evidence type="ECO:0007744" key="51">
    <source>
        <dbReference type="PDB" id="4MP0"/>
    </source>
</evidence>
<evidence type="ECO:0007744" key="52">
    <source>
        <dbReference type="PDB" id="4XPN"/>
    </source>
</evidence>
<evidence type="ECO:0007744" key="53">
    <source>
        <dbReference type="PDB" id="6CZO"/>
    </source>
</evidence>
<evidence type="ECO:0007744" key="54">
    <source>
        <dbReference type="PDB" id="7TVF"/>
    </source>
</evidence>
<evidence type="ECO:0007744" key="55">
    <source>
        <dbReference type="PDB" id="7TXH"/>
    </source>
</evidence>
<evidence type="ECO:0007744" key="56">
    <source>
        <dbReference type="PDB" id="7UPI"/>
    </source>
</evidence>
<evidence type="ECO:0007744" key="57">
    <source>
        <dbReference type="PDB" id="8SW5"/>
    </source>
</evidence>
<evidence type="ECO:0007744" key="58">
    <source>
    </source>
</evidence>
<evidence type="ECO:0007744" key="59">
    <source>
    </source>
</evidence>
<evidence type="ECO:0007744" key="60">
    <source>
    </source>
</evidence>
<evidence type="ECO:0007744" key="61">
    <source>
    </source>
</evidence>
<evidence type="ECO:0007744" key="62">
    <source>
    </source>
</evidence>
<evidence type="ECO:0007829" key="63">
    <source>
        <dbReference type="PDB" id="6ALZ"/>
    </source>
</evidence>
<evidence type="ECO:0007829" key="64">
    <source>
        <dbReference type="PDB" id="6ZEG"/>
    </source>
</evidence>
<evidence type="ECO:0007829" key="65">
    <source>
        <dbReference type="PDB" id="7QM2"/>
    </source>
</evidence>
<evidence type="ECO:0007829" key="66">
    <source>
        <dbReference type="PDB" id="8DWL"/>
    </source>
</evidence>
<comment type="function">
    <text evidence="2 12 23 24 26 27 30 31 33 36 37 38 39 40 41 42 44 45">Protein phosphatase that associates with over 200 regulatory proteins to form highly specific holoenzymes which dephosphorylate hundreds of biological targets (PubMed:28216226, PubMed:30158517, PubMed:35768504, PubMed:35830882, PubMed:35831509, PubMed:36175670, PubMed:39603239, PubMed:39603240). Protein phosphatase 1 (PP1) is essential for cell division, transcription elongation, and participates in the regulation of glycogen metabolism, muscle contractility and protein synthesis (PubMed:35768504, PubMed:35830882, PubMed:35831509, PubMed:36175670, PubMed:39603239, PubMed:39603240). Involved in regulation of ionic conductances and long-term synaptic plasticity. May play an important role in dephosphorylating substrates such as the postsynaptic density-associated Ca(2+)/calmodulin dependent protein kinase II. Catalytic component of the PNUTS-PP1 protein phosphatase complex, a protein phosphatase 1 (PP1) complex that promotes RNA polymerase II transcription pause-release, allowing transcription elongation: the PNUTS-PP1 complex mediates the release of RNA polymerase II from promoter-proximal region of genes by catalyzing dephosphorylation of proteins involved in transcription, such as AFF4, CDK9, MEPCE, INTS12, NCBP1, POLR2M/GDOWN1 and SUPT6H (PubMed:39603239, PubMed:39603240). The PNUTS-PP1 complex also regulates transcription termination by mediating dephosphorylation of SUPT5H in termination zones downstream of poly(A) sites, thereby promoting deceleration of RNA polymerase II transcription (PubMed:31677974). PNUTS-PP1 complex is also involved in the response to replication stress by mediating dephosphorylation of POLR2A at 'Ser-5' of the CTD, promoting RNA polymerase II degradation (PubMed:33264625). PNUTS-PP1 also plays a role in the control of chromatin structure and cell cycle progression during the transition from mitosis into interphase (PubMed:20516061). Regulates NEK2 function in terms of kinase activity and centrosome number and splitting, both in the presence and absence of radiation-induced DNA damage (PubMed:17283141). Regulator of neural tube and optic fissure closure, and enteric neural crest cell (ENCCs) migration during development (By similarity). In balance with CSNK1D and CSNK1E, determines the circadian period length, through the regulation of the speed and rhythmicity of PER1 and PER2 phosphorylation (PubMed:21712997). May dephosphorylate CSNK1D and CSNK1E (PubMed:21712997). Dephosphorylates the 'Ser-418' residue of FOXP3 in regulatory T-cells (Treg) from patients with rheumatoid arthritis, thereby inactivating FOXP3 and rendering Treg cells functionally defective (PubMed:23396208). Dephosphorylates CENPA (PubMed:25556658). Dephosphorylates the 'Ser-139' residue of ATG16L1 causing dissociation of ATG12-ATG5-ATG16L1 complex, thereby inhibiting autophagy (PubMed:26083323). Together with PPP1CC (PP1-gamma subunit), dephosphorylates IFIH1/MDA5 and RIG-I leading to their activation and a functional innate immune response (PubMed:23499489). Core component of the SHOC2-MRAS-PP1c (SMP) holophosphatase complex that regulates the MAPK pathway activation (PubMed:35768504, PubMed:35830882, PubMed:35831509, PubMed:36175670). The SMP complex specifically dephosphorylates the inhibitory phosphorylation at 'Ser-259' of RAF1 kinase, 'Ser-365' of BRAF kinase and 'Ser-214' of ARAF kinase, stimulating their kinase activities (PubMed:35768504, PubMed:35830882, PubMed:35831509, PubMed:36175670). The SMP complex enhances the dephosphorylation activity and substrate specificity of PP1c (PubMed:35768504, PubMed:36175670).</text>
</comment>
<comment type="function">
    <text evidence="34">(Microbial infection) Necessary for alphaviruses replication.</text>
</comment>
<comment type="catalytic activity">
    <reaction evidence="31 33 37 38 39 40 41 42 44 45">
        <text>O-phospho-L-seryl-[protein] + H2O = L-seryl-[protein] + phosphate</text>
        <dbReference type="Rhea" id="RHEA:20629"/>
        <dbReference type="Rhea" id="RHEA-COMP:9863"/>
        <dbReference type="Rhea" id="RHEA-COMP:11604"/>
        <dbReference type="ChEBI" id="CHEBI:15377"/>
        <dbReference type="ChEBI" id="CHEBI:29999"/>
        <dbReference type="ChEBI" id="CHEBI:43474"/>
        <dbReference type="ChEBI" id="CHEBI:83421"/>
        <dbReference type="EC" id="3.1.3.16"/>
    </reaction>
</comment>
<comment type="catalytic activity">
    <reaction evidence="31 37 44 45">
        <text>O-phospho-L-threonyl-[protein] + H2O = L-threonyl-[protein] + phosphate</text>
        <dbReference type="Rhea" id="RHEA:47004"/>
        <dbReference type="Rhea" id="RHEA-COMP:11060"/>
        <dbReference type="Rhea" id="RHEA-COMP:11605"/>
        <dbReference type="ChEBI" id="CHEBI:15377"/>
        <dbReference type="ChEBI" id="CHEBI:30013"/>
        <dbReference type="ChEBI" id="CHEBI:43474"/>
        <dbReference type="ChEBI" id="CHEBI:61977"/>
        <dbReference type="EC" id="3.1.3.16"/>
    </reaction>
</comment>
<comment type="cofactor">
    <cofactor evidence="4">
        <name>Fe cation</name>
        <dbReference type="ChEBI" id="CHEBI:24875"/>
    </cofactor>
    <text evidence="4">Binds 1 Fe cation per subunit.</text>
</comment>
<comment type="cofactor">
    <cofactor evidence="16 35 40 41 42">
        <name>Mn(2+)</name>
        <dbReference type="ChEBI" id="CHEBI:29035"/>
    </cofactor>
    <text evidence="16 35 40 41 42">Binds 2 manganese ions per subunit.</text>
</comment>
<comment type="activity regulation">
    <text evidence="9">The phosphatase activity of the PPP1R15A-PP1 complex toward EIF2S1 is specifically inhibited by Salubrinal, a drug that protects cells from endoplasmic reticulum stress.</text>
</comment>
<comment type="subunit">
    <text evidence="2 3 6 7 8 10 11 12 13 14 15 16 18 19 20 21 22 23 25 26 28 30 31 32 35 37 38 39 40 41 42 43 44 45 46">PP1 comprises a catalytic subunit, PPP1CA, PPP1CB or PPP1CC, which is folded into its native form by inhibitor 2 and glycogen synthetase kinase 3, and then complexed to one or several targeting or regulatory subunits. PPP1R12A, PPP1R12B and PPP1R12C mediate binding to myosin. PPP1R3A (in skeletal muscle), PPP1R3B (in liver), PPP1R3C, PPP1R3D and PPP1R3F (in brain) mediate binding to glycogen. Interacts with PPP1R39 (By similarity). Interacts with BTBD10 (By similarity). Interacts with KCTD20 (By similarity). Interacts with PPP1R9A and PPP1R9B. Part of a complex containing PPP1R15B, PP1 and NCK1/2. Interacts with PHACTR4; which acts as an activator of PP1 activity (By similarity). Interacts with PPP1R15A and PPP1R15B; the interactions mediate binding to EIF2S1 (PubMed:26095357). Interacts with PPP1R7. Interacts with YLPM1. Forms a complex with ILF2, ILF3, YLPM1, KHDRBS1, RBMX and NCOA5. Interacts with NOM1 and PPP1R8. Interacts with PPP1R16B. Interacts with RPSA only in the presence of PPP1R16B. Component of the PNUTS-PP1 phosphatase complex, composed of PPP1R10/PNUTS, TOX4, WDR82, and PPP1CA or PPP1CB or PPP1CC (PubMed:20516061, PubMed:31677974, PubMed:33264625, PubMed:39603240, PubMed:39603239, PubMed:39446389). Interacts with PPP1R10/PNUTS and PPP1R8. Interacts with WDR82 in the presence of PPP1R10/PNUTS. Interacts with TRIM28; the interaction dephosphorylates TRIM28 on 'Ser-824' and forms a complex at the p21 promoter site. Interacts with isoform 1 and isoform 4 of NEK2. Interacts with FER; this promotes phosphorylation at Thr-320. Interacts with DAB2; the interaction is mutually exclusive with the AXIN1:PPP1CA interaction. Interacts with FOXP3 (PubMed:23396208). Interacts with CENPA (PubMed:25556658). Interacts with ATG16L1 (PubMed:26083323). Found in a complex with PPP1CA, PPP1CC, SHC1 and PEAK1 (PubMed:23846654). Interacts with tensin TNS1 (PubMed:19826001). Interacts with SAXO4, PPP1R21, PPP1R26, PPP1R27, PPP1R35, PPP1R36, PPP1R37, SH3RF2, ELFN1 and ELFN2 (PubMed:19389623). Interacts with TPRN; the interaction results in inhibition of PPC1A phosphatase activity (PubMed:23213405). Interacts with SKA1 (via C-terminus); the interaction is direct and required for the recruitment of PP1 to the kinetochore (PubMed:26981768). Interacts with the KNL1 complex subunit KNL1; the interaction is direct and mutually exclusive with KNL1 binding to microtubules (PubMed:30100357). Component of the SHOC2-MRAS-PP1c (SMP) complex consisting of SHOC2, GTP-bound M-Ras/MRAS and the catalytic subunit of protein phosphatase 1 (either PPP1CA, PPP1CB or PPP1CC) (PubMed:35768504, PubMed:35830882, PubMed:35831509, PubMed:36175670). SHOC2 and PP1c preferably bind M-Ras/MRAS, but they also bind K-Ras/KRAS, N-Ras/NRAS and H-Ras/HRAS; these interactions are GTP-dependent and both SHOC2 and PP1c are required to form a stable complex (PubMed:35768504, PubMed:35830882, PubMed:35831509, PubMed:36175670). Interacts with SHOC2 in the absence of Ras GTPases (PubMed:35768504, PubMed:35831509).</text>
</comment>
<comment type="subunit">
    <text evidence="46">(Microbial infection) Interacts with HHV-1 ICP34.5.</text>
</comment>
<comment type="subunit">
    <text evidence="34">(Microbial infection) Interacts with Venezuelan equine encephalitis virus (VEEV) capsid protein; this interaction dephosphorylates the capsid protein, which increases its ability to bind to the viral genome.</text>
</comment>
<comment type="interaction">
    <interactant intactId="EBI-357253">
        <id>P62136</id>
    </interactant>
    <interactant intactId="EBI-2008380">
        <id>Q6ZMQ8</id>
        <label>AATK</label>
    </interactant>
    <organismsDiffer>false</organismsDiffer>
    <experiments>3</experiments>
</comment>
<comment type="interaction">
    <interactant intactId="EBI-357253">
        <id>P62136</id>
    </interactant>
    <interactant intactId="EBI-296087">
        <id>P31749</id>
        <label>AKT1</label>
    </interactant>
    <organismsDiffer>false</organismsDiffer>
    <experiments>4</experiments>
</comment>
<comment type="interaction">
    <interactant intactId="EBI-357253">
        <id>P62136</id>
    </interactant>
    <interactant intactId="EBI-446492">
        <id>O14727</id>
        <label>APAF1</label>
    </interactant>
    <organismsDiffer>false</organismsDiffer>
    <experiments>2</experiments>
</comment>
<comment type="interaction">
    <interactant intactId="EBI-357253">
        <id>P62136</id>
    </interactant>
    <interactant intactId="EBI-77613">
        <id>P05067</id>
        <label>APP</label>
    </interactant>
    <organismsDiffer>false</organismsDiffer>
    <experiments>3</experiments>
</comment>
<comment type="interaction">
    <interactant intactId="EBI-357253">
        <id>P62136</id>
    </interactant>
    <interactant intactId="EBI-710484">
        <id>O15169</id>
        <label>AXIN1</label>
    </interactant>
    <organismsDiffer>false</organismsDiffer>
    <experiments>4</experiments>
</comment>
<comment type="interaction">
    <interactant intactId="EBI-357253">
        <id>P62136</id>
    </interactant>
    <interactant intactId="EBI-349905">
        <id>P38398</id>
        <label>BRCA1</label>
    </interactant>
    <organismsDiffer>false</organismsDiffer>
    <experiments>2</experiments>
</comment>
<comment type="interaction">
    <interactant intactId="EBI-357253">
        <id>P62136</id>
    </interactant>
    <interactant intactId="EBI-768015">
        <id>O95400</id>
        <label>CD2BP2</label>
    </interactant>
    <organismsDiffer>false</organismsDiffer>
    <experiments>2</experiments>
</comment>
<comment type="interaction">
    <interactant intactId="EBI-357253">
        <id>P62136</id>
    </interactant>
    <interactant intactId="EBI-374880">
        <id>Q99459</id>
        <label>CDC5L</label>
    </interactant>
    <organismsDiffer>false</organismsDiffer>
    <experiments>2</experiments>
</comment>
<comment type="interaction">
    <interactant intactId="EBI-357253">
        <id>P62136</id>
    </interactant>
    <interactant intactId="EBI-727477">
        <id>P12830</id>
        <label>CDH1</label>
    </interactant>
    <organismsDiffer>false</organismsDiffer>
    <experiments>2</experiments>
</comment>
<comment type="interaction">
    <interactant intactId="EBI-357253">
        <id>P62136</id>
    </interactant>
    <interactant intactId="EBI-2339778">
        <id>Q8TEP8</id>
        <label>CEP192</label>
    </interactant>
    <organismsDiffer>false</organismsDiffer>
    <experiments>2</experiments>
</comment>
<comment type="interaction">
    <interactant intactId="EBI-357253">
        <id>P62136</id>
    </interactant>
    <interactant intactId="EBI-743375">
        <id>Q9NX63</id>
        <label>CHCHD3</label>
    </interactant>
    <organismsDiffer>false</organismsDiffer>
    <experiments>2</experiments>
</comment>
<comment type="interaction">
    <interactant intactId="EBI-357253">
        <id>P62136</id>
    </interactant>
    <interactant intactId="EBI-750390">
        <id>Q6PJW8</id>
        <label>CNST</label>
    </interactant>
    <organismsDiffer>false</organismsDiffer>
    <experiments>5</experiments>
</comment>
<comment type="interaction">
    <interactant intactId="EBI-357253">
        <id>P62136</id>
    </interactant>
    <interactant intactId="EBI-4311573">
        <id>Q96S65</id>
        <label>CSRNP1</label>
    </interactant>
    <organismsDiffer>false</organismsDiffer>
    <experiments>9</experiments>
</comment>
<comment type="interaction">
    <interactant intactId="EBI-357253">
        <id>P62136</id>
    </interactant>
    <interactant intactId="EBI-5235958">
        <id>Q9H175</id>
        <label>CSRNP2</label>
    </interactant>
    <organismsDiffer>false</organismsDiffer>
    <experiments>11</experiments>
</comment>
<comment type="interaction">
    <interactant intactId="EBI-357253">
        <id>P62136</id>
    </interactant>
    <interactant intactId="EBI-80440">
        <id>Q92796</id>
        <label>DLG3</label>
    </interactant>
    <organismsDiffer>false</organismsDiffer>
    <experiments>2</experiments>
</comment>
<comment type="interaction">
    <interactant intactId="EBI-357253">
        <id>P62136</id>
    </interactant>
    <interactant intactId="EBI-1056162">
        <id>P05198</id>
        <label>EIF2S1</label>
    </interactant>
    <organismsDiffer>false</organismsDiffer>
    <experiments>2</experiments>
</comment>
<comment type="interaction">
    <interactant intactId="EBI-357253">
        <id>P62136</id>
    </interactant>
    <interactant intactId="EBI-1245868">
        <id>P55199</id>
        <label>ELL</label>
    </interactant>
    <organismsDiffer>false</organismsDiffer>
    <experiments>2</experiments>
</comment>
<comment type="interaction">
    <interactant intactId="EBI-357253">
        <id>P62136</id>
    </interactant>
    <interactant intactId="EBI-983719">
        <id>Q9BZS1</id>
        <label>FOXP3</label>
    </interactant>
    <organismsDiffer>false</organismsDiffer>
    <experiments>2</experiments>
</comment>
<comment type="interaction">
    <interactant intactId="EBI-357253">
        <id>P62136</id>
    </interactant>
    <interactant intactId="EBI-466029">
        <id>P42858</id>
        <label>HTT</label>
    </interactant>
    <organismsDiffer>false</organismsDiffer>
    <experiments>10</experiments>
</comment>
<comment type="interaction">
    <interactant intactId="EBI-357253">
        <id>P62136</id>
    </interactant>
    <interactant intactId="EBI-355426">
        <id>Q8NI77</id>
        <label>KIF18A</label>
    </interactant>
    <organismsDiffer>false</organismsDiffer>
    <experiments>4</experiments>
</comment>
<comment type="interaction">
    <interactant intactId="EBI-357253">
        <id>P62136</id>
    </interactant>
    <interactant intactId="EBI-1001161">
        <id>Q8NG31</id>
        <label>KNL1</label>
    </interactant>
    <organismsDiffer>false</organismsDiffer>
    <experiments>3</experiments>
</comment>
<comment type="interaction">
    <interactant intactId="EBI-357253">
        <id>P62136</id>
    </interactant>
    <interactant intactId="EBI-5323863">
        <id>Q5S007</id>
        <label>LRRK2</label>
    </interactant>
    <organismsDiffer>false</organismsDiffer>
    <experiments>6</experiments>
</comment>
<comment type="interaction">
    <interactant intactId="EBI-357253">
        <id>P62136</id>
    </interactant>
    <interactant intactId="EBI-5235884">
        <id>O00566</id>
        <label>MPHOSPH10</label>
    </interactant>
    <organismsDiffer>false</organismsDiffer>
    <experiments>2</experiments>
</comment>
<comment type="interaction">
    <interactant intactId="EBI-357253">
        <id>P62136</id>
    </interactant>
    <interactant intactId="EBI-311059">
        <id>Q9UPR0</id>
        <label>PLCL2</label>
    </interactant>
    <organismsDiffer>false</organismsDiffer>
    <experiments>3</experiments>
</comment>
<comment type="interaction">
    <interactant intactId="EBI-357253">
        <id>P62136</id>
    </interactant>
    <interactant intactId="EBI-1210346">
        <id>Q96QC0</id>
        <label>PPP1R10</label>
    </interactant>
    <organismsDiffer>false</organismsDiffer>
    <experiments>5</experiments>
</comment>
<comment type="interaction">
    <interactant intactId="EBI-357253">
        <id>P62136</id>
    </interactant>
    <interactant intactId="EBI-1105153">
        <id>Q96KQ4</id>
        <label>PPP1R13B</label>
    </interactant>
    <organismsDiffer>false</organismsDiffer>
    <experiments>13</experiments>
</comment>
<comment type="interaction">
    <interactant intactId="EBI-357253">
        <id>P62136</id>
    </interactant>
    <interactant intactId="EBI-5550163">
        <id>Q8WUF5</id>
        <label>PPP1R13L</label>
    </interactant>
    <organismsDiffer>false</organismsDiffer>
    <experiments>9</experiments>
</comment>
<comment type="interaction">
    <interactant intactId="EBI-357253">
        <id>P62136</id>
    </interactant>
    <interactant intactId="EBI-714746">
        <id>O75807</id>
        <label>PPP1R15A</label>
    </interactant>
    <organismsDiffer>false</organismsDiffer>
    <experiments>12</experiments>
</comment>
<comment type="interaction">
    <interactant intactId="EBI-357253">
        <id>P62136</id>
    </interactant>
    <interactant intactId="EBI-2815482">
        <id>Q5SWA1</id>
        <label>PPP1R15B</label>
    </interactant>
    <organismsDiffer>false</organismsDiffer>
    <experiments>5</experiments>
</comment>
<comment type="interaction">
    <interactant intactId="EBI-357253">
        <id>P62136</id>
    </interactant>
    <interactant intactId="EBI-10293968">
        <id>Q96T49</id>
        <label>PPP1R16B</label>
    </interactant>
    <organismsDiffer>false</organismsDiffer>
    <experiments>5</experiments>
</comment>
<comment type="interaction">
    <interactant intactId="EBI-357253">
        <id>P62136</id>
    </interactant>
    <interactant intactId="EBI-2557469">
        <id>Q6NYC8</id>
        <label>PPP1R18</label>
    </interactant>
    <organismsDiffer>false</organismsDiffer>
    <experiments>7</experiments>
</comment>
<comment type="interaction">
    <interactant intactId="EBI-357253">
        <id>P62136</id>
    </interactant>
    <interactant intactId="EBI-1056517">
        <id>P41236</id>
        <label>PPP1R2</label>
    </interactant>
    <organismsDiffer>false</organismsDiffer>
    <experiments>12</experiments>
</comment>
<comment type="interaction">
    <interactant intactId="EBI-357253">
        <id>P62136</id>
    </interactant>
    <interactant intactId="EBI-308500">
        <id>Q5T8A7</id>
        <label>PPP1R26</label>
    </interactant>
    <organismsDiffer>false</organismsDiffer>
    <experiments>2</experiments>
</comment>
<comment type="interaction">
    <interactant intactId="EBI-357253">
        <id>P62136</id>
    </interactant>
    <interactant intactId="EBI-5235602">
        <id>Q86WC6</id>
        <label>PPP1R27</label>
    </interactant>
    <organismsDiffer>false</organismsDiffer>
    <experiments>5</experiments>
</comment>
<comment type="interaction">
    <interactant intactId="EBI-357253">
        <id>P62136</id>
    </interactant>
    <interactant intactId="EBI-10251630">
        <id>Q6NXS1</id>
        <label>PPP1R2B</label>
    </interactant>
    <organismsDiffer>false</organismsDiffer>
    <experiments>3</experiments>
</comment>
<comment type="interaction">
    <interactant intactId="EBI-357253">
        <id>P62136</id>
    </interactant>
    <interactant intactId="EBI-12404293">
        <id>O14990</id>
        <label>PPP1R2C</label>
    </interactant>
    <organismsDiffer>false</organismsDiffer>
    <experiments>3</experiments>
</comment>
<comment type="interaction">
    <interactant intactId="EBI-357253">
        <id>P62136</id>
    </interactant>
    <interactant intactId="EBI-5235692">
        <id>O75864</id>
        <label>PPP1R37</label>
    </interactant>
    <organismsDiffer>false</organismsDiffer>
    <experiments>6</experiments>
</comment>
<comment type="interaction">
    <interactant intactId="EBI-357253">
        <id>P62136</id>
    </interactant>
    <interactant intactId="EBI-3918864">
        <id>Q86XI6</id>
        <label>PPP1R3B</label>
    </interactant>
    <organismsDiffer>false</organismsDiffer>
    <experiments>5</experiments>
</comment>
<comment type="interaction">
    <interactant intactId="EBI-357253">
        <id>P62136</id>
    </interactant>
    <interactant intactId="EBI-2506727">
        <id>Q9UQK1</id>
        <label>PPP1R3C</label>
    </interactant>
    <organismsDiffer>false</organismsDiffer>
    <experiments>5</experiments>
</comment>
<comment type="interaction">
    <interactant intactId="EBI-357253">
        <id>P62136</id>
    </interactant>
    <interactant intactId="EBI-1045661">
        <id>O95685</id>
        <label>PPP1R3D</label>
    </interactant>
    <organismsDiffer>false</organismsDiffer>
    <experiments>4</experiments>
</comment>
<comment type="interaction">
    <interactant intactId="EBI-357253">
        <id>P62136</id>
    </interactant>
    <interactant intactId="EBI-1024281">
        <id>Q15435</id>
        <label>PPP1R7</label>
    </interactant>
    <organismsDiffer>false</organismsDiffer>
    <experiments>8</experiments>
</comment>
<comment type="interaction">
    <interactant intactId="EBI-357253">
        <id>P62136</id>
    </interactant>
    <interactant intactId="EBI-716633">
        <id>Q12972</id>
        <label>PPP1R8</label>
    </interactant>
    <organismsDiffer>false</organismsDiffer>
    <experiments>9</experiments>
</comment>
<comment type="interaction">
    <interactant intactId="EBI-357253">
        <id>P62136</id>
    </interactant>
    <interactant intactId="EBI-16012257">
        <id>Q12972-1</id>
        <label>PPP1R8</label>
    </interactant>
    <organismsDiffer>false</organismsDiffer>
    <experiments>6</experiments>
</comment>
<comment type="interaction">
    <interactant intactId="EBI-357253">
        <id>P62136</id>
    </interactant>
    <interactant intactId="EBI-12252736">
        <id>Q12972-2</id>
        <label>PPP1R8</label>
    </interactant>
    <organismsDiffer>false</organismsDiffer>
    <experiments>7</experiments>
</comment>
<comment type="interaction">
    <interactant intactId="EBI-357253">
        <id>P62136</id>
    </interactant>
    <interactant intactId="EBI-351275">
        <id>Q96SB3</id>
        <label>PPP1R9B</label>
    </interactant>
    <organismsDiffer>false</organismsDiffer>
    <experiments>7</experiments>
</comment>
<comment type="interaction">
    <interactant intactId="EBI-357253">
        <id>P62136</id>
    </interactant>
    <interactant intactId="EBI-696162">
        <id>P60484</id>
        <label>PTEN</label>
    </interactant>
    <organismsDiffer>false</organismsDiffer>
    <experiments>2</experiments>
</comment>
<comment type="interaction">
    <interactant intactId="EBI-357253">
        <id>P62136</id>
    </interactant>
    <interactant intactId="EBI-491274">
        <id>P06400</id>
        <label>RB1</label>
    </interactant>
    <organismsDiffer>false</organismsDiffer>
    <experiments>2</experiments>
</comment>
<comment type="interaction">
    <interactant intactId="EBI-357253">
        <id>P62136</id>
    </interactant>
    <interactant intactId="EBI-711331">
        <id>Q5UIP0</id>
        <label>RIF1</label>
    </interactant>
    <organismsDiffer>false</organismsDiffer>
    <experiments>5</experiments>
</comment>
<comment type="interaction">
    <interactant intactId="EBI-357253">
        <id>P62136</id>
    </interactant>
    <interactant intactId="EBI-372051">
        <id>Q14684</id>
        <label>RRP1B</label>
    </interactant>
    <organismsDiffer>false</organismsDiffer>
    <experiments>3</experiments>
</comment>
<comment type="interaction">
    <interactant intactId="EBI-357253">
        <id>P62136</id>
    </interactant>
    <interactant intactId="EBI-458391">
        <id>P04271</id>
        <label>S100B</label>
    </interactant>
    <organismsDiffer>false</organismsDiffer>
    <experiments>3</experiments>
</comment>
<comment type="interaction">
    <interactant intactId="EBI-357253">
        <id>P62136</id>
    </interactant>
    <interactant intactId="EBI-4311771">
        <id>Q7Z5V6</id>
        <label>SAXO4</label>
    </interactant>
    <organismsDiffer>false</organismsDiffer>
    <experiments>3</experiments>
</comment>
<comment type="interaction">
    <interactant intactId="EBI-357253">
        <id>P62136</id>
    </interactant>
    <interactant intactId="EBI-743371">
        <id>A8K8P3</id>
        <label>SFI1</label>
    </interactant>
    <organismsDiffer>false</organismsDiffer>
    <experiments>2</experiments>
</comment>
<comment type="interaction">
    <interactant intactId="EBI-357253">
        <id>P62136</id>
    </interactant>
    <interactant intactId="EBI-989213">
        <id>Q562F6</id>
        <label>SGO2</label>
    </interactant>
    <organismsDiffer>false</organismsDiffer>
    <experiments>4</experiments>
</comment>
<comment type="interaction">
    <interactant intactId="EBI-357253">
        <id>P62136</id>
    </interactant>
    <interactant intactId="EBI-747035">
        <id>Q9H788</id>
        <label>SH2D4A</label>
    </interactant>
    <organismsDiffer>false</organismsDiffer>
    <experiments>4</experiments>
</comment>
<comment type="interaction">
    <interactant intactId="EBI-357253">
        <id>P62136</id>
    </interactant>
    <interactant intactId="EBI-2130111">
        <id>Q8TEC5</id>
        <label>SH3RF2</label>
    </interactant>
    <organismsDiffer>false</organismsDiffer>
    <experiments>3</experiments>
</comment>
<comment type="interaction">
    <interactant intactId="EBI-357253">
        <id>P62136</id>
    </interactant>
    <interactant intactId="EBI-307486">
        <id>P63208</id>
        <label>SKP1</label>
    </interactant>
    <organismsDiffer>false</organismsDiffer>
    <experiments>4</experiments>
</comment>
<comment type="interaction">
    <interactant intactId="EBI-357253">
        <id>P62136</id>
    </interactant>
    <interactant intactId="EBI-5235340">
        <id>Q7Z699</id>
        <label>SPRED1</label>
    </interactant>
    <organismsDiffer>false</organismsDiffer>
    <experiments>4</experiments>
</comment>
<comment type="interaction">
    <interactant intactId="EBI-357253">
        <id>P62136</id>
    </interactant>
    <interactant intactId="EBI-25892332">
        <id>P43405-2</id>
        <label>SYK</label>
    </interactant>
    <organismsDiffer>false</organismsDiffer>
    <experiments>3</experiments>
</comment>
<comment type="interaction">
    <interactant intactId="EBI-357253">
        <id>P62136</id>
    </interactant>
    <interactant intactId="EBI-2690103">
        <id>Q9HCH5</id>
        <label>SYTL2</label>
    </interactant>
    <organismsDiffer>false</organismsDiffer>
    <experiments>2</experiments>
</comment>
<comment type="interaction">
    <interactant intactId="EBI-357253">
        <id>P62136</id>
    </interactant>
    <interactant intactId="EBI-5235567">
        <id>Q14C87</id>
        <label>TMEM132D</label>
    </interactant>
    <organismsDiffer>false</organismsDiffer>
    <experiments>2</experiments>
</comment>
<comment type="interaction">
    <interactant intactId="EBI-357253">
        <id>P62136</id>
    </interactant>
    <interactant intactId="EBI-2559665">
        <id>Q5JTV8</id>
        <label>TOR1AIP1</label>
    </interactant>
    <organismsDiffer>false</organismsDiffer>
    <experiments>2</experiments>
</comment>
<comment type="interaction">
    <interactant intactId="EBI-357253">
        <id>P62136</id>
    </interactant>
    <interactant intactId="EBI-11952721">
        <id>Q05BL1</id>
        <label>TP53BP2</label>
    </interactant>
    <organismsDiffer>false</organismsDiffer>
    <experiments>3</experiments>
</comment>
<comment type="interaction">
    <interactant intactId="EBI-357253">
        <id>P62136</id>
    </interactant>
    <interactant intactId="EBI-77642">
        <id>Q13625</id>
        <label>TP53BP2</label>
    </interactant>
    <organismsDiffer>false</organismsDiffer>
    <experiments>10</experiments>
</comment>
<comment type="interaction">
    <interactant intactId="EBI-357253">
        <id>P62136</id>
    </interactant>
    <interactant intactId="EBI-3942777">
        <id>Q4KMQ1</id>
        <label>TPRN</label>
    </interactant>
    <organismsDiffer>false</organismsDiffer>
    <experiments>5</experiments>
</comment>
<comment type="interaction">
    <interactant intactId="EBI-357253">
        <id>P62136</id>
    </interactant>
    <interactant intactId="EBI-11978969">
        <id>Q4KMQ1-2</id>
        <label>TPRN</label>
    </interactant>
    <organismsDiffer>false</organismsDiffer>
    <experiments>6</experiments>
</comment>
<comment type="interaction">
    <interactant intactId="EBI-357253">
        <id>P62136</id>
    </interactant>
    <interactant intactId="EBI-2559060">
        <id>Q8TEL6</id>
        <label>TRPC4AP</label>
    </interactant>
    <organismsDiffer>false</organismsDiffer>
    <experiments>2</experiments>
</comment>
<comment type="interaction">
    <interactant intactId="EBI-357253">
        <id>P62136</id>
    </interactant>
    <interactant intactId="EBI-396587">
        <id>P49815</id>
        <label>TSC2</label>
    </interactant>
    <organismsDiffer>false</organismsDiffer>
    <experiments>2</experiments>
</comment>
<comment type="interaction">
    <interactant intactId="EBI-357253">
        <id>P62136</id>
    </interactant>
    <interactant intactId="EBI-355164">
        <id>P55072</id>
        <label>VCP</label>
    </interactant>
    <organismsDiffer>false</organismsDiffer>
    <experiments>2</experiments>
</comment>
<comment type="interaction">
    <interactant intactId="EBI-357253">
        <id>P62136</id>
    </interactant>
    <interactant intactId="EBI-714455">
        <id>Q9Y2W2</id>
        <label>WBP11</label>
    </interactant>
    <organismsDiffer>false</organismsDiffer>
    <experiments>5</experiments>
</comment>
<comment type="interaction">
    <interactant intactId="EBI-357253">
        <id>P62136</id>
    </interactant>
    <interactant intactId="EBI-457907">
        <id>Q9H4A3</id>
        <label>WNK1</label>
    </interactant>
    <organismsDiffer>false</organismsDiffer>
    <experiments>2</experiments>
</comment>
<comment type="interaction">
    <interactant intactId="EBI-357253">
        <id>P62136</id>
    </interactant>
    <interactant intactId="EBI-358193">
        <id>P16989</id>
        <label>YBX3</label>
    </interactant>
    <organismsDiffer>false</organismsDiffer>
    <experiments>3</experiments>
</comment>
<comment type="interaction">
    <interactant intactId="EBI-357253">
        <id>P62136</id>
    </interactant>
    <interactant intactId="EBI-712871">
        <id>P49750</id>
        <label>YLPM1</label>
    </interactant>
    <organismsDiffer>false</organismsDiffer>
    <experiments>4</experiments>
</comment>
<comment type="interaction">
    <interactant intactId="EBI-357253">
        <id>P62136</id>
    </interactant>
    <interactant intactId="EBI-4401611">
        <id>Q9HBF4</id>
        <label>ZFYVE1</label>
    </interactant>
    <organismsDiffer>false</organismsDiffer>
    <experiments>2</experiments>
</comment>
<comment type="interaction">
    <interactant intactId="EBI-357253">
        <id>P62136</id>
    </interactant>
    <interactant intactId="EBI-298055">
        <id>Q7Z3T8</id>
        <label>ZFYVE16</label>
    </interactant>
    <organismsDiffer>false</organismsDiffer>
    <experiments>3</experiments>
</comment>
<comment type="interaction">
    <interactant intactId="EBI-357253">
        <id>P62136</id>
    </interactant>
    <interactant intactId="EBI-296817">
        <id>O95405</id>
        <label>ZFYVE9</label>
    </interactant>
    <organismsDiffer>false</organismsDiffer>
    <experiments>4</experiments>
</comment>
<comment type="interaction">
    <interactant intactId="EBI-357253">
        <id>P62136</id>
    </interactant>
    <interactant intactId="EBI-79859">
        <id>O08785</id>
        <label>Clock</label>
    </interactant>
    <organismsDiffer>true</organismsDiffer>
    <experiments>2</experiments>
</comment>
<comment type="interaction">
    <interactant intactId="EBI-357253">
        <id>P62136</id>
    </interactant>
    <interactant intactId="EBI-6149234">
        <id>P36313</id>
        <label>ICP34.5</label>
    </interactant>
    <organismsDiffer>true</organismsDiffer>
    <experiments>4</experiments>
</comment>
<comment type="interaction">
    <interactant intactId="EBI-357253">
        <id>P62136</id>
    </interactant>
    <interactant intactId="EBI-25592177">
        <id>K9N4V7</id>
        <label>N</label>
    </interactant>
    <organismsDiffer>true</organismsDiffer>
    <experiments>3</experiments>
</comment>
<comment type="interaction">
    <interactant intactId="EBI-357253">
        <id>P62136</id>
    </interactant>
    <interactant intactId="EBI-14033469">
        <id>Q76TK5</id>
        <label>ORF23</label>
    </interactant>
    <organismsDiffer>true</organismsDiffer>
    <experiments>2</experiments>
</comment>
<comment type="interaction">
    <interactant intactId="EBI-357253">
        <id>P62136</id>
    </interactant>
    <interactant intactId="EBI-7092421">
        <id>O35867</id>
        <label>Ppp1r9a</label>
    </interactant>
    <organismsDiffer>true</organismsDiffer>
    <experiments>3</experiments>
</comment>
<comment type="interaction">
    <interactant intactId="EBI-357253">
        <id>P62136</id>
    </interactant>
    <interactant intactId="EBI-80022">
        <id>O35274</id>
        <label>Ppp1r9b</label>
    </interactant>
    <organismsDiffer>true</organismsDiffer>
    <experiments>8</experiments>
</comment>
<comment type="subcellular location">
    <subcellularLocation>
        <location evidence="7 34">Cytoplasm</location>
    </subcellularLocation>
    <subcellularLocation>
        <location evidence="7 15">Nucleus</location>
    </subcellularLocation>
    <subcellularLocation>
        <location evidence="7 15">Nucleus</location>
        <location evidence="7 15">Nucleoplasm</location>
    </subcellularLocation>
    <subcellularLocation>
        <location evidence="7 15">Nucleus</location>
        <location evidence="7 15">Nucleolus</location>
    </subcellularLocation>
    <text evidence="34">Primarily nuclear and largely excluded from the nucleolus. Highly mobile in cells and can be relocalized through interaction with targeting subunits. NOM1 plays a role in targeting this protein to the nucleolus. In the presence of PPP1R8 relocalizes from the nucleus to nuclear speckles. Shuttles toward the cytosol during infection with VEEV (PubMed:29769351).</text>
</comment>
<comment type="alternative products">
    <event type="alternative splicing"/>
    <isoform>
        <id>P62136-1</id>
        <name>1</name>
        <sequence type="displayed"/>
    </isoform>
    <isoform>
        <id>P62136-2</id>
        <name>2</name>
        <sequence type="described" ref="VSP_043377"/>
    </isoform>
    <isoform>
        <id>P62136-3</id>
        <name>3</name>
        <sequence type="described" ref="VSP_046754"/>
    </isoform>
</comment>
<comment type="induction">
    <text evidence="26">Up-regulated in synovial fluid mononuclear cells and peripheral blood mononuclear cells from patients with rheumatoid arthritis.</text>
</comment>
<comment type="PTM">
    <text evidence="11">Phosphorylated. Dephosphorylated at Thr-320 in the presence of ionizing radiation.</text>
</comment>
<comment type="similarity">
    <text evidence="49">Belongs to the PPP phosphatase family. PP-1 subfamily.</text>
</comment>
<comment type="caution">
    <text evidence="17 29">Was originally thought to be part of the MLL5-L complex, at least composed of KMT2E, STK38, PPP1CA, PPP1CB, PPP1CC, HCFC1, ACTB and OGT (PubMed:19377461). However, the corresponding article has been retracted (PubMed:24336203).</text>
</comment>
<comment type="online information" name="Protein Spotlight">
    <link uri="https://www.proteinspotlight.org/back_issues/032"/>
    <text>The things we forget - Issue 32 of March 2003</text>
</comment>
<protein>
    <recommendedName>
        <fullName>Serine/threonine-protein phosphatase PP1-alpha catalytic subunit</fullName>
        <shortName>PP-1A</shortName>
        <ecNumber evidence="31 39 40 41 42">3.1.3.16</ecNumber>
    </recommendedName>
</protein>
<proteinExistence type="evidence at protein level"/>
<feature type="initiator methionine" description="Removed" evidence="47 61">
    <location>
        <position position="1"/>
    </location>
</feature>
<feature type="chain" id="PRO_0000058774" description="Serine/threonine-protein phosphatase PP1-alpha catalytic subunit">
    <location>
        <begin position="2"/>
        <end position="330"/>
    </location>
</feature>
<feature type="region of interest" description="Disordered" evidence="5">
    <location>
        <begin position="306"/>
        <end position="330"/>
    </location>
</feature>
<feature type="active site" description="Proton donor" evidence="1">
    <location>
        <position position="125"/>
    </location>
</feature>
<feature type="binding site" evidence="35 40 41 42 43 53 54 55 56 57">
    <location>
        <position position="64"/>
    </location>
    <ligand>
        <name>Mn(2+)</name>
        <dbReference type="ChEBI" id="CHEBI:29035"/>
        <label>1</label>
    </ligand>
</feature>
<feature type="binding site" evidence="35 40 41 42 43 53 54 55 56 57">
    <location>
        <position position="64"/>
    </location>
    <ligand>
        <name>Mn(2+)</name>
        <dbReference type="ChEBI" id="CHEBI:29035"/>
        <label>2</label>
    </ligand>
</feature>
<feature type="binding site" evidence="35 40 41 42 43 53 54 55 56 57">
    <location>
        <position position="66"/>
    </location>
    <ligand>
        <name>Mn(2+)</name>
        <dbReference type="ChEBI" id="CHEBI:29035"/>
        <label>1</label>
    </ligand>
</feature>
<feature type="binding site" evidence="35 40 41 42 43 53 54 55 56 57">
    <location>
        <position position="92"/>
    </location>
    <ligand>
        <name>Mn(2+)</name>
        <dbReference type="ChEBI" id="CHEBI:29035"/>
        <label>1</label>
    </ligand>
</feature>
<feature type="binding site" evidence="35 40 41 42 43 53 54 55 56 57">
    <location>
        <position position="92"/>
    </location>
    <ligand>
        <name>Mn(2+)</name>
        <dbReference type="ChEBI" id="CHEBI:29035"/>
        <label>2</label>
    </ligand>
</feature>
<feature type="binding site" evidence="35 40 41 42 43 53 54 55 56 57">
    <location>
        <position position="124"/>
    </location>
    <ligand>
        <name>Mn(2+)</name>
        <dbReference type="ChEBI" id="CHEBI:29035"/>
        <label>2</label>
    </ligand>
</feature>
<feature type="binding site" evidence="35 40 41 42 43 53 54 55 56 57">
    <location>
        <position position="173"/>
    </location>
    <ligand>
        <name>Mn(2+)</name>
        <dbReference type="ChEBI" id="CHEBI:29035"/>
        <label>2</label>
    </ligand>
</feature>
<feature type="binding site" evidence="35 40 41 42 43 53 54 55 56 57">
    <location>
        <position position="248"/>
    </location>
    <ligand>
        <name>Mn(2+)</name>
        <dbReference type="ChEBI" id="CHEBI:29035"/>
        <label>2</label>
    </ligand>
</feature>
<feature type="modified residue" description="N-acetylserine" evidence="47 61">
    <location>
        <position position="2"/>
    </location>
</feature>
<feature type="modified residue" description="Phosphoserine" evidence="62">
    <location>
        <position position="2"/>
    </location>
</feature>
<feature type="modified residue" description="Phosphoserine" evidence="62">
    <location>
        <position position="22"/>
    </location>
</feature>
<feature type="modified residue" description="N6-acetyllysine" evidence="2">
    <location>
        <position position="305"/>
    </location>
</feature>
<feature type="modified residue" description="Phosphotyrosine" evidence="2">
    <location>
        <position position="306"/>
    </location>
</feature>
<feature type="modified residue" description="Phosphothreonine" evidence="11 58 59 60 62">
    <location>
        <position position="320"/>
    </location>
</feature>
<feature type="modified residue" description="Phosphoserine" evidence="62">
    <location>
        <position position="325"/>
    </location>
</feature>
<feature type="splice variant" id="VSP_043377" description="In isoform 2." evidence="48">
    <original>E</original>
    <variation>EGSRVLTPHCAP</variation>
    <location>
        <position position="18"/>
    </location>
</feature>
<feature type="splice variant" id="VSP_046754" description="In isoform 3." evidence="49">
    <location>
        <begin position="19"/>
        <end position="62"/>
    </location>
</feature>
<feature type="mutagenesis site" description="Promotes SMP complex formation." evidence="40 41 42">
    <original>P</original>
    <variation>R</variation>
    <location>
        <position position="50"/>
    </location>
</feature>
<feature type="mutagenesis site" description="No effect on SMP complex formation." evidence="42">
    <original>A</original>
    <variation>P</variation>
    <location>
        <position position="57"/>
    </location>
</feature>
<feature type="mutagenesis site" description="Promotes SMP complex formation." evidence="42">
    <original>E</original>
    <variation>A</variation>
    <location>
        <position position="184"/>
    </location>
</feature>
<feature type="mutagenesis site" description="Abolishes SMP complex formation." evidence="42">
    <original>R</original>
    <variation>A</variation>
    <location>
        <position position="188"/>
    </location>
</feature>
<feature type="helix" evidence="64">
    <location>
        <begin position="9"/>
        <end position="18"/>
    </location>
</feature>
<feature type="helix" evidence="64">
    <location>
        <begin position="19"/>
        <end position="21"/>
    </location>
</feature>
<feature type="helix" evidence="64">
    <location>
        <begin position="32"/>
        <end position="48"/>
    </location>
</feature>
<feature type="strand" evidence="64">
    <location>
        <begin position="51"/>
        <end position="55"/>
    </location>
</feature>
<feature type="strand" evidence="64">
    <location>
        <begin position="57"/>
        <end position="62"/>
    </location>
</feature>
<feature type="helix" evidence="64">
    <location>
        <begin position="69"/>
        <end position="79"/>
    </location>
</feature>
<feature type="strand" evidence="64">
    <location>
        <begin position="87"/>
        <end position="89"/>
    </location>
</feature>
<feature type="strand" evidence="64">
    <location>
        <begin position="94"/>
        <end position="98"/>
    </location>
</feature>
<feature type="helix" evidence="64">
    <location>
        <begin position="100"/>
        <end position="113"/>
    </location>
</feature>
<feature type="turn" evidence="64">
    <location>
        <begin position="115"/>
        <end position="117"/>
    </location>
</feature>
<feature type="strand" evidence="64">
    <location>
        <begin position="118"/>
        <end position="120"/>
    </location>
</feature>
<feature type="helix" evidence="63">
    <location>
        <begin position="124"/>
        <end position="126"/>
    </location>
</feature>
<feature type="helix" evidence="64">
    <location>
        <begin position="128"/>
        <end position="131"/>
    </location>
</feature>
<feature type="turn" evidence="65">
    <location>
        <begin position="132"/>
        <end position="135"/>
    </location>
</feature>
<feature type="helix" evidence="64">
    <location>
        <begin position="136"/>
        <end position="143"/>
    </location>
</feature>
<feature type="helix" evidence="64">
    <location>
        <begin position="146"/>
        <end position="156"/>
    </location>
</feature>
<feature type="strand" evidence="64">
    <location>
        <begin position="162"/>
        <end position="165"/>
    </location>
</feature>
<feature type="turn" evidence="64">
    <location>
        <begin position="166"/>
        <end position="168"/>
    </location>
</feature>
<feature type="strand" evidence="64">
    <location>
        <begin position="169"/>
        <end position="171"/>
    </location>
</feature>
<feature type="helix" evidence="64">
    <location>
        <begin position="183"/>
        <end position="187"/>
    </location>
</feature>
<feature type="strand" evidence="64">
    <location>
        <begin position="197"/>
        <end position="199"/>
    </location>
</feature>
<feature type="helix" evidence="64">
    <location>
        <begin position="200"/>
        <end position="206"/>
    </location>
</feature>
<feature type="strand" evidence="64">
    <location>
        <begin position="214"/>
        <end position="218"/>
    </location>
</feature>
<feature type="strand" evidence="64">
    <location>
        <begin position="222"/>
        <end position="227"/>
    </location>
</feature>
<feature type="helix" evidence="64">
    <location>
        <begin position="229"/>
        <end position="239"/>
    </location>
</feature>
<feature type="strand" evidence="64">
    <location>
        <begin position="242"/>
        <end position="246"/>
    </location>
</feature>
<feature type="strand" evidence="66">
    <location>
        <begin position="248"/>
        <end position="251"/>
    </location>
</feature>
<feature type="strand" evidence="64">
    <location>
        <begin position="254"/>
        <end position="258"/>
    </location>
</feature>
<feature type="turn" evidence="64">
    <location>
        <begin position="259"/>
        <end position="262"/>
    </location>
</feature>
<feature type="strand" evidence="64">
    <location>
        <begin position="263"/>
        <end position="267"/>
    </location>
</feature>
<feature type="helix" evidence="64">
    <location>
        <begin position="272"/>
        <end position="274"/>
    </location>
</feature>
<feature type="strand" evidence="64">
    <location>
        <begin position="280"/>
        <end position="285"/>
    </location>
</feature>
<feature type="strand" evidence="64">
    <location>
        <begin position="290"/>
        <end position="297"/>
    </location>
</feature>
<gene>
    <name type="primary">PPP1CA</name>
    <name type="synonym">PPP1A</name>
</gene>
<organism>
    <name type="scientific">Homo sapiens</name>
    <name type="common">Human</name>
    <dbReference type="NCBI Taxonomy" id="9606"/>
    <lineage>
        <taxon>Eukaryota</taxon>
        <taxon>Metazoa</taxon>
        <taxon>Chordata</taxon>
        <taxon>Craniata</taxon>
        <taxon>Vertebrata</taxon>
        <taxon>Euteleostomi</taxon>
        <taxon>Mammalia</taxon>
        <taxon>Eutheria</taxon>
        <taxon>Euarchontoglires</taxon>
        <taxon>Primates</taxon>
        <taxon>Haplorrhini</taxon>
        <taxon>Catarrhini</taxon>
        <taxon>Hominidae</taxon>
        <taxon>Homo</taxon>
    </lineage>
</organism>
<name>PP1A_HUMAN</name>
<reference key="1">
    <citation type="journal article" date="1993" name="Gene">
        <title>Cloning and characterization of a human protein phosphatase 1-encoding cDNA.</title>
        <authorList>
            <person name="Song Q."/>
            <person name="Khanna K.K."/>
            <person name="Lu H."/>
            <person name="Lavin M.F."/>
        </authorList>
    </citation>
    <scope>NUCLEOTIDE SEQUENCE [MRNA] (ISOFORM 1)</scope>
    <source>
        <tissue>Lung</tissue>
    </source>
</reference>
<reference key="2">
    <citation type="journal article" date="1993" name="Genes Dev.">
        <title>The retinoblastoma protein associates with the protein phosphatase type 1 catalytic subunit.</title>
        <authorList>
            <person name="Durfee T."/>
            <person name="Becherer K."/>
            <person name="Chen P.L."/>
            <person name="Yeh S.H."/>
            <person name="Yang Y."/>
            <person name="Kilburn A.E."/>
            <person name="Lee W.H."/>
            <person name="Elledge S.J."/>
        </authorList>
    </citation>
    <scope>NUCLEOTIDE SEQUENCE [MRNA] (ISOFORM 2)</scope>
</reference>
<reference key="3">
    <citation type="submission" date="1991-04" db="EMBL/GenBank/DDBJ databases">
        <authorList>
            <person name="Tung L."/>
        </authorList>
    </citation>
    <scope>NUCLEOTIDE SEQUENCE [MRNA] (ISOFORM 1)</scope>
    <source>
        <tissue>Liver</tissue>
    </source>
</reference>
<reference key="4">
    <citation type="journal article" date="2004" name="Nat. Genet.">
        <title>Complete sequencing and characterization of 21,243 full-length human cDNAs.</title>
        <authorList>
            <person name="Ota T."/>
            <person name="Suzuki Y."/>
            <person name="Nishikawa T."/>
            <person name="Otsuki T."/>
            <person name="Sugiyama T."/>
            <person name="Irie R."/>
            <person name="Wakamatsu A."/>
            <person name="Hayashi K."/>
            <person name="Sato H."/>
            <person name="Nagai K."/>
            <person name="Kimura K."/>
            <person name="Makita H."/>
            <person name="Sekine M."/>
            <person name="Obayashi M."/>
            <person name="Nishi T."/>
            <person name="Shibahara T."/>
            <person name="Tanaka T."/>
            <person name="Ishii S."/>
            <person name="Yamamoto J."/>
            <person name="Saito K."/>
            <person name="Kawai Y."/>
            <person name="Isono Y."/>
            <person name="Nakamura Y."/>
            <person name="Nagahari K."/>
            <person name="Murakami K."/>
            <person name="Yasuda T."/>
            <person name="Iwayanagi T."/>
            <person name="Wagatsuma M."/>
            <person name="Shiratori A."/>
            <person name="Sudo H."/>
            <person name="Hosoiri T."/>
            <person name="Kaku Y."/>
            <person name="Kodaira H."/>
            <person name="Kondo H."/>
            <person name="Sugawara M."/>
            <person name="Takahashi M."/>
            <person name="Kanda K."/>
            <person name="Yokoi T."/>
            <person name="Furuya T."/>
            <person name="Kikkawa E."/>
            <person name="Omura Y."/>
            <person name="Abe K."/>
            <person name="Kamihara K."/>
            <person name="Katsuta N."/>
            <person name="Sato K."/>
            <person name="Tanikawa M."/>
            <person name="Yamazaki M."/>
            <person name="Ninomiya K."/>
            <person name="Ishibashi T."/>
            <person name="Yamashita H."/>
            <person name="Murakawa K."/>
            <person name="Fujimori K."/>
            <person name="Tanai H."/>
            <person name="Kimata M."/>
            <person name="Watanabe M."/>
            <person name="Hiraoka S."/>
            <person name="Chiba Y."/>
            <person name="Ishida S."/>
            <person name="Ono Y."/>
            <person name="Takiguchi S."/>
            <person name="Watanabe S."/>
            <person name="Yosida M."/>
            <person name="Hotuta T."/>
            <person name="Kusano J."/>
            <person name="Kanehori K."/>
            <person name="Takahashi-Fujii A."/>
            <person name="Hara H."/>
            <person name="Tanase T.-O."/>
            <person name="Nomura Y."/>
            <person name="Togiya S."/>
            <person name="Komai F."/>
            <person name="Hara R."/>
            <person name="Takeuchi K."/>
            <person name="Arita M."/>
            <person name="Imose N."/>
            <person name="Musashino K."/>
            <person name="Yuuki H."/>
            <person name="Oshima A."/>
            <person name="Sasaki N."/>
            <person name="Aotsuka S."/>
            <person name="Yoshikawa Y."/>
            <person name="Matsunawa H."/>
            <person name="Ichihara T."/>
            <person name="Shiohata N."/>
            <person name="Sano S."/>
            <person name="Moriya S."/>
            <person name="Momiyama H."/>
            <person name="Satoh N."/>
            <person name="Takami S."/>
            <person name="Terashima Y."/>
            <person name="Suzuki O."/>
            <person name="Nakagawa S."/>
            <person name="Senoh A."/>
            <person name="Mizoguchi H."/>
            <person name="Goto Y."/>
            <person name="Shimizu F."/>
            <person name="Wakebe H."/>
            <person name="Hishigaki H."/>
            <person name="Watanabe T."/>
            <person name="Sugiyama A."/>
            <person name="Takemoto M."/>
            <person name="Kawakami B."/>
            <person name="Yamazaki M."/>
            <person name="Watanabe K."/>
            <person name="Kumagai A."/>
            <person name="Itakura S."/>
            <person name="Fukuzumi Y."/>
            <person name="Fujimori Y."/>
            <person name="Komiyama M."/>
            <person name="Tashiro H."/>
            <person name="Tanigami A."/>
            <person name="Fujiwara T."/>
            <person name="Ono T."/>
            <person name="Yamada K."/>
            <person name="Fujii Y."/>
            <person name="Ozaki K."/>
            <person name="Hirao M."/>
            <person name="Ohmori Y."/>
            <person name="Kawabata A."/>
            <person name="Hikiji T."/>
            <person name="Kobatake N."/>
            <person name="Inagaki H."/>
            <person name="Ikema Y."/>
            <person name="Okamoto S."/>
            <person name="Okitani R."/>
            <person name="Kawakami T."/>
            <person name="Noguchi S."/>
            <person name="Itoh T."/>
            <person name="Shigeta K."/>
            <person name="Senba T."/>
            <person name="Matsumura K."/>
            <person name="Nakajima Y."/>
            <person name="Mizuno T."/>
            <person name="Morinaga M."/>
            <person name="Sasaki M."/>
            <person name="Togashi T."/>
            <person name="Oyama M."/>
            <person name="Hata H."/>
            <person name="Watanabe M."/>
            <person name="Komatsu T."/>
            <person name="Mizushima-Sugano J."/>
            <person name="Satoh T."/>
            <person name="Shirai Y."/>
            <person name="Takahashi Y."/>
            <person name="Nakagawa K."/>
            <person name="Okumura K."/>
            <person name="Nagase T."/>
            <person name="Nomura N."/>
            <person name="Kikuchi H."/>
            <person name="Masuho Y."/>
            <person name="Yamashita R."/>
            <person name="Nakai K."/>
            <person name="Yada T."/>
            <person name="Nakamura Y."/>
            <person name="Ohara O."/>
            <person name="Isogai T."/>
            <person name="Sugano S."/>
        </authorList>
    </citation>
    <scope>NUCLEOTIDE SEQUENCE [LARGE SCALE MRNA] (ISOFORM 1)</scope>
    <source>
        <tissue>Synovial cell</tissue>
    </source>
</reference>
<reference key="5">
    <citation type="submission" date="2003-05" db="EMBL/GenBank/DDBJ databases">
        <title>Cloning of human full-length CDSs in BD Creator(TM) system donor vector.</title>
        <authorList>
            <person name="Kalnine N."/>
            <person name="Chen X."/>
            <person name="Rolfs A."/>
            <person name="Halleck A."/>
            <person name="Hines L."/>
            <person name="Eisenstein S."/>
            <person name="Koundinya M."/>
            <person name="Raphael J."/>
            <person name="Moreira D."/>
            <person name="Kelley T."/>
            <person name="LaBaer J."/>
            <person name="Lin Y."/>
            <person name="Phelan M."/>
            <person name="Farmer A."/>
        </authorList>
    </citation>
    <scope>NUCLEOTIDE SEQUENCE [LARGE SCALE MRNA] (ISOFORM 1)</scope>
</reference>
<reference key="6">
    <citation type="journal article" date="2006" name="Nature">
        <title>Human chromosome 11 DNA sequence and analysis including novel gene identification.</title>
        <authorList>
            <person name="Taylor T.D."/>
            <person name="Noguchi H."/>
            <person name="Totoki Y."/>
            <person name="Toyoda A."/>
            <person name="Kuroki Y."/>
            <person name="Dewar K."/>
            <person name="Lloyd C."/>
            <person name="Itoh T."/>
            <person name="Takeda T."/>
            <person name="Kim D.-W."/>
            <person name="She X."/>
            <person name="Barlow K.F."/>
            <person name="Bloom T."/>
            <person name="Bruford E."/>
            <person name="Chang J.L."/>
            <person name="Cuomo C.A."/>
            <person name="Eichler E."/>
            <person name="FitzGerald M.G."/>
            <person name="Jaffe D.B."/>
            <person name="LaButti K."/>
            <person name="Nicol R."/>
            <person name="Park H.-S."/>
            <person name="Seaman C."/>
            <person name="Sougnez C."/>
            <person name="Yang X."/>
            <person name="Zimmer A.R."/>
            <person name="Zody M.C."/>
            <person name="Birren B.W."/>
            <person name="Nusbaum C."/>
            <person name="Fujiyama A."/>
            <person name="Hattori M."/>
            <person name="Rogers J."/>
            <person name="Lander E.S."/>
            <person name="Sakaki Y."/>
        </authorList>
    </citation>
    <scope>NUCLEOTIDE SEQUENCE [LARGE SCALE GENOMIC DNA]</scope>
</reference>
<reference key="7">
    <citation type="journal article" date="2004" name="Genome Res.">
        <title>The status, quality, and expansion of the NIH full-length cDNA project: the Mammalian Gene Collection (MGC).</title>
        <authorList>
            <consortium name="The MGC Project Team"/>
        </authorList>
    </citation>
    <scope>NUCLEOTIDE SEQUENCE [LARGE SCALE MRNA] (ISOFORM 1)</scope>
    <source>
        <tissue>Muscle</tissue>
        <tissue>Pancreas</tissue>
        <tissue>Placenta</tissue>
    </source>
</reference>
<reference key="8">
    <citation type="submission" date="2008-10" db="UniProtKB">
        <authorList>
            <person name="Bienvenut W.V."/>
            <person name="Heiserich L."/>
            <person name="Gottlieb E."/>
        </authorList>
    </citation>
    <scope>PROTEIN SEQUENCE OF 2-15 AND 247-261</scope>
    <scope>CLEAVAGE OF INITIATOR METHIONINE</scope>
    <scope>ACETYLATION AT SER-2</scope>
    <scope>IDENTIFICATION BY MASS SPECTROMETRY</scope>
    <source>
        <tissue>Colon carcinoma</tissue>
    </source>
</reference>
<reference key="9">
    <citation type="journal article" date="1990" name="Genomics">
        <title>Localization of the gene encoding a type I protein phosphatase catalytic subunit to human chromosome band 11q13.</title>
        <authorList>
            <person name="Barker H.M."/>
            <person name="Jones T.A."/>
            <person name="da Cruz e Silva E.F."/>
            <person name="Spurr N.K."/>
            <person name="Sheer D."/>
            <person name="Cohen P.T.W."/>
        </authorList>
    </citation>
    <scope>NUCLEOTIDE SEQUENCE [MRNA] OF 23-330 (ISOFORM 1)</scope>
</reference>
<reference key="10">
    <citation type="journal article" date="1997" name="Proc. Natl. Acad. Sci. U.S.A.">
        <title>The gamma(1)34.5 protein of herpes simplex virus 1 complexes with protein phosphatase 1alpha to dephosphorylate the alpha subunit of the eukaryotic translation initiation factor 2 and preclude the shutoff of protein synthesis by double-stranded RNA-activated protein kinase.</title>
        <authorList>
            <person name="He B."/>
            <person name="Gross M."/>
            <person name="Roizman B."/>
        </authorList>
    </citation>
    <scope>INTERACTION WITH PPP1R15A</scope>
    <scope>INTERACTION WITH HHV-1 ICP34.5 (MICROBIAL INFECTION)</scope>
</reference>
<reference key="11">
    <citation type="journal article" date="2001" name="J. Cell Sci.">
        <title>Dynamic targeting of protein phosphatase 1 within the nuclei of living mammalian cells.</title>
        <authorList>
            <person name="Trinkle-Mulcahy L."/>
            <person name="Sleeman J.E."/>
            <person name="Lamond A.I."/>
        </authorList>
    </citation>
    <scope>SUBCELLULAR LOCATION</scope>
    <scope>INTERACTION WITH PPP1R8</scope>
</reference>
<reference key="12">
    <citation type="journal article" date="2001" name="Mol. Cell. Biol.">
        <title>Growth arrest and DNA damage-inducible protein GADD34 assembles a novel signaling complex containing protein phosphatase 1 and inhibitor 1.</title>
        <authorList>
            <person name="Connor J.H."/>
            <person name="Weiser D.C."/>
            <person name="Li S."/>
            <person name="Hallenbeck J.M."/>
            <person name="Shenolikar S."/>
        </authorList>
    </citation>
    <scope>INTERACTION WITH PPP1R15A</scope>
</reference>
<reference key="13">
    <citation type="journal article" date="2002" name="J. Biol. Chem.">
        <title>Binding of the concave surface of the Sds22 superhelix to the alpha 4/alpha 5/alpha 6-triangle of protein phosphatase-1.</title>
        <authorList>
            <person name="Ceulemans H."/>
            <person name="Vulsteke V."/>
            <person name="De Maeyer M."/>
            <person name="Tatchell K."/>
            <person name="Stalmans W."/>
            <person name="Bollen M."/>
        </authorList>
    </citation>
    <scope>INTERACTION WITH PPP1R7</scope>
</reference>
<reference key="14">
    <citation type="journal article" date="2002" name="J. Cell Sci.">
        <title>Protein phosphatase 1 -- targeted in many directions.</title>
        <authorList>
            <person name="Cohen P.T.W."/>
        </authorList>
    </citation>
    <scope>REVIEW</scope>
</reference>
<reference key="15">
    <citation type="journal article" date="2005" name="Biochem. Biophys. Res. Commun.">
        <title>The protein phosphatase-1 targeting subunit TIMAP regulates LAMR1 phosphorylation.</title>
        <authorList>
            <person name="Kim K."/>
            <person name="Li L."/>
            <person name="Kozlowski K."/>
            <person name="Suh H.S."/>
            <person name="Cao W."/>
            <person name="Ballermann B.J."/>
        </authorList>
    </citation>
    <scope>INTERACTION WITH PPP1R16B AND RPSA</scope>
</reference>
<reference key="16">
    <citation type="journal article" date="2005" name="Science">
        <title>A selective inhibitor of eIF2alpha dephosphorylation protects cells from ER stress.</title>
        <authorList>
            <person name="Boyce M."/>
            <person name="Bryant K.F."/>
            <person name="Jousse C."/>
            <person name="Long K."/>
            <person name="Harding H.P."/>
            <person name="Scheuner D."/>
            <person name="Kaufman R.J."/>
            <person name="Ma D."/>
            <person name="Coen D.M."/>
            <person name="Ron D."/>
            <person name="Yuan J."/>
        </authorList>
    </citation>
    <scope>ACTIVITY REGULATION</scope>
</reference>
<reference key="17">
    <citation type="journal article" date="2006" name="Oncogene">
        <title>Downregulation of Fer induces PP1 activation and cell-cycle arrest in malignant cells.</title>
        <authorList>
            <person name="Pasder O."/>
            <person name="Shpungin S."/>
            <person name="Salem Y."/>
            <person name="Makovsky A."/>
            <person name="Vilchick S."/>
            <person name="Michaeli S."/>
            <person name="Malovani H."/>
            <person name="Nir U."/>
        </authorList>
    </citation>
    <scope>INTERACTION WITH FER</scope>
    <scope>PHOSPHORYLATION AT THR-320</scope>
</reference>
<reference key="18">
    <citation type="journal article" date="2007" name="Biochim. Biophys. Acta">
        <title>The nuclear PP1 interacting protein ZAP3 (ZAP) is a putative nucleoside kinase that complexes with SAM68, CIA, NF110/45, and HNRNP-G.</title>
        <authorList>
            <person name="Ulke-Lemee A."/>
            <person name="Trinkle-Mulcahy L."/>
            <person name="Chaulk S."/>
            <person name="Bernstein N.K."/>
            <person name="Morrice N."/>
            <person name="Glover M."/>
            <person name="Lamond A.I."/>
            <person name="Moorhead G.B.G."/>
        </authorList>
    </citation>
    <scope>IDENTIFICATION IN A COMPLEX WITH ILF2; ILF3; YLPM1; KHDRBS1; RBMX AND NCOA5</scope>
    <scope>INTERACTION WITH YLPM1</scope>
</reference>
<reference key="19">
    <citation type="journal article" date="2007" name="Cancer Res.">
        <title>Protein phosphatase-1alpha regulates centrosome splitting through Nek2.</title>
        <authorList>
            <person name="Mi J."/>
            <person name="Guo C."/>
            <person name="Brautigan D.L."/>
            <person name="Larner J.M."/>
        </authorList>
    </citation>
    <scope>FUNCTION</scope>
    <scope>INTERACTION WITH NEK2</scope>
    <scope>DEPHOSPHORYLATION</scope>
</reference>
<reference key="20">
    <citation type="journal article" date="2007" name="J. Biol. Chem.">
        <title>Alternative splicing controls nuclear translocation of the cell cycle-regulated Nek2 kinase.</title>
        <authorList>
            <person name="Wu W."/>
            <person name="Baxter J.E."/>
            <person name="Wattam S.L."/>
            <person name="Hayward D.G."/>
            <person name="Fardilha M."/>
            <person name="Knebel A."/>
            <person name="Ford E.M."/>
            <person name="da Cruz e Silva E.F."/>
            <person name="Fry A.M."/>
        </authorList>
    </citation>
    <scope>INTERACTION WITH NEK2</scope>
</reference>
<reference key="21">
    <citation type="journal article" date="2008" name="J. Biol. Chem.">
        <title>NOM1 targets protein phosphatase I to the nucleolus.</title>
        <authorList>
            <person name="Gunawardena S.R."/>
            <person name="Ruis B.L."/>
            <person name="Meyer J.A."/>
            <person name="Kapoor M."/>
            <person name="Conklin K.F."/>
        </authorList>
    </citation>
    <scope>SUBCELLULAR LOCATION</scope>
    <scope>INTERACTION WITH NOM1</scope>
</reference>
<reference key="22">
    <citation type="journal article" date="2008" name="J. Proteome Res.">
        <title>Phosphoproteome of resting human platelets.</title>
        <authorList>
            <person name="Zahedi R.P."/>
            <person name="Lewandrowski U."/>
            <person name="Wiesner J."/>
            <person name="Wortelkamp S."/>
            <person name="Moebius J."/>
            <person name="Schuetz C."/>
            <person name="Walter U."/>
            <person name="Gambaryan S."/>
            <person name="Sickmann A."/>
        </authorList>
    </citation>
    <scope>PHOSPHORYLATION [LARGE SCALE ANALYSIS] AT THR-320</scope>
    <scope>IDENTIFICATION BY MASS SPECTROMETRY [LARGE SCALE ANALYSIS]</scope>
    <source>
        <tissue>Platelet</tissue>
    </source>
</reference>
<reference key="23">
    <citation type="journal article" date="2008" name="Proc. Natl. Acad. Sci. U.S.A.">
        <title>A quantitative atlas of mitotic phosphorylation.</title>
        <authorList>
            <person name="Dephoure N."/>
            <person name="Zhou C."/>
            <person name="Villen J."/>
            <person name="Beausoleil S.A."/>
            <person name="Bakalarski C.E."/>
            <person name="Elledge S.J."/>
            <person name="Gygi S.P."/>
        </authorList>
    </citation>
    <scope>PHOSPHORYLATION [LARGE SCALE ANALYSIS] AT THR-320</scope>
    <scope>IDENTIFICATION BY MASS SPECTROMETRY [LARGE SCALE ANALYSIS]</scope>
    <source>
        <tissue>Cervix carcinoma</tissue>
    </source>
</reference>
<reference key="24">
    <citation type="journal article" date="2009" name="J. Biol. Chem.">
        <title>Tensin1 requires protein phosphatase-1alpha in addition to RhoGAP DLC-1 to control cell polarization, migration, and invasion.</title>
        <authorList>
            <person name="Hall E.H."/>
            <person name="Daugherty A.E."/>
            <person name="Choi C.K."/>
            <person name="Horwitz A.F."/>
            <person name="Brautigan D.L."/>
        </authorList>
    </citation>
    <scope>INTERACTION WITH TNS1</scope>
</reference>
<reference key="25">
    <citation type="journal article" date="2009" name="Chem. Biol.">
        <title>Docking motif-guided mapping of the interactome of protein phosphatase-1.</title>
        <authorList>
            <person name="Hendrickx A."/>
            <person name="Beullens M."/>
            <person name="Ceulemans H."/>
            <person name="Den Abt T."/>
            <person name="Van Eynde A."/>
            <person name="Nicolaescu E."/>
            <person name="Lesage B."/>
            <person name="Bollen M."/>
        </authorList>
    </citation>
    <scope>INTERACTION WITH SAXO4; PPP1R21; PPP1R26; PPP1R27; PPP1R35; PPP1R36; PPP1R37; SH3RF2; ELFN1 AND ELFN2</scope>
</reference>
<reference key="26">
    <citation type="journal article" date="2009" name="Nature">
        <title>GlcNAcylation of a histone methyltransferase in retinoic-acid-induced granulopoiesis.</title>
        <authorList>
            <person name="Fujiki R."/>
            <person name="Chikanishi T."/>
            <person name="Hashiba W."/>
            <person name="Ito H."/>
            <person name="Takada I."/>
            <person name="Roeder R.G."/>
            <person name="Kitagawa H."/>
            <person name="Kato S."/>
        </authorList>
    </citation>
    <scope>RETRACTED PAPER</scope>
</reference>
<reference key="27">
    <citation type="journal article" date="2014" name="Nature">
        <title>Retraction: GlcNAcylation of a histone methyltransferase in retinoic-acid-induced granulopoiesis.</title>
        <authorList>
            <person name="Fujiki R."/>
            <person name="Chikanishi T."/>
            <person name="Hashiba W."/>
            <person name="Ito H."/>
            <person name="Takada I."/>
            <person name="Roeder R.G."/>
            <person name="Kitagawa H."/>
            <person name="Kato S."/>
        </authorList>
    </citation>
    <scope>CAUTION</scope>
    <scope>RETRACTION NOTICE OF PUBMED:19377461</scope>
</reference>
<reference key="28">
    <citation type="journal article" date="2010" name="Sci. Signal.">
        <title>Quantitative phosphoproteomics reveals widespread full phosphorylation site occupancy during mitosis.</title>
        <authorList>
            <person name="Olsen J.V."/>
            <person name="Vermeulen M."/>
            <person name="Santamaria A."/>
            <person name="Kumar C."/>
            <person name="Miller M.L."/>
            <person name="Jensen L.J."/>
            <person name="Gnad F."/>
            <person name="Cox J."/>
            <person name="Jensen T.S."/>
            <person name="Nigg E.A."/>
            <person name="Brunak S."/>
            <person name="Mann M."/>
        </authorList>
    </citation>
    <scope>PHOSPHORYLATION [LARGE SCALE ANALYSIS] AT THR-320</scope>
    <scope>IDENTIFICATION BY MASS SPECTROMETRY [LARGE SCALE ANALYSIS]</scope>
    <source>
        <tissue>Cervix carcinoma</tissue>
    </source>
</reference>
<reference key="29">
    <citation type="journal article" date="2011" name="BMC Syst. Biol.">
        <title>Initial characterization of the human central proteome.</title>
        <authorList>
            <person name="Burkard T.R."/>
            <person name="Planyavsky M."/>
            <person name="Kaupe I."/>
            <person name="Breitwieser F.P."/>
            <person name="Buerckstuemmer T."/>
            <person name="Bennett K.L."/>
            <person name="Superti-Furga G."/>
            <person name="Colinge J."/>
        </authorList>
    </citation>
    <scope>IDENTIFICATION BY MASS SPECTROMETRY [LARGE SCALE ANALYSIS]</scope>
</reference>
<reference key="30">
    <citation type="journal article" date="2012" name="Proc. Natl. Acad. Sci. U.S.A.">
        <title>N-terminal acetylome analyses and functional insights of the N-terminal acetyltransferase NatB.</title>
        <authorList>
            <person name="Van Damme P."/>
            <person name="Lasa M."/>
            <person name="Polevoda B."/>
            <person name="Gazquez C."/>
            <person name="Elosegui-Artola A."/>
            <person name="Kim D.S."/>
            <person name="De Juan-Pardo E."/>
            <person name="Demeyer K."/>
            <person name="Hole K."/>
            <person name="Larrea E."/>
            <person name="Timmerman E."/>
            <person name="Prieto J."/>
            <person name="Arnesen T."/>
            <person name="Sherman F."/>
            <person name="Gevaert K."/>
            <person name="Aldabe R."/>
        </authorList>
    </citation>
    <scope>ACETYLATION [LARGE SCALE ANALYSIS] AT SER-2</scope>
    <scope>CLEAVAGE OF INITIATOR METHIONINE [LARGE SCALE ANALYSIS]</scope>
    <scope>IDENTIFICATION BY MASS SPECTROMETRY [LARGE SCALE ANALYSIS]</scope>
</reference>
<reference key="31">
    <citation type="journal article" date="2013" name="J. Proteome Res.">
        <title>Toward a comprehensive characterization of a human cancer cell phosphoproteome.</title>
        <authorList>
            <person name="Zhou H."/>
            <person name="Di Palma S."/>
            <person name="Preisinger C."/>
            <person name="Peng M."/>
            <person name="Polat A.N."/>
            <person name="Heck A.J."/>
            <person name="Mohammed S."/>
        </authorList>
    </citation>
    <scope>PHOSPHORYLATION [LARGE SCALE ANALYSIS] AT SER-2; SER-22; THR-320 AND SER-325</scope>
    <scope>IDENTIFICATION BY MASS SPECTROMETRY [LARGE SCALE ANALYSIS]</scope>
    <source>
        <tissue>Cervix carcinoma</tissue>
        <tissue>Erythroleukemia</tissue>
    </source>
</reference>
<reference key="32">
    <citation type="journal article" date="2009" name="Oncogene">
        <title>Dab2 stabilizes Axin and attenuates Wnt/beta-catenin signaling by preventing protein phosphatase 1 (PP1)-Axin interactions.</title>
        <authorList>
            <person name="Jiang Y."/>
            <person name="Luo W."/>
            <person name="Howe P.H."/>
        </authorList>
    </citation>
    <scope>INTERACTION WITH DAB2</scope>
</reference>
<reference key="33">
    <citation type="journal article" date="2010" name="J. Biol. Chem.">
        <title>Identification and characterization of a novel human PP1 phosphatase complex.</title>
        <authorList>
            <person name="Lee J.H."/>
            <person name="You J."/>
            <person name="Dobrota E."/>
            <person name="Skalnik D.G."/>
        </authorList>
    </citation>
    <scope>FUNCTION</scope>
    <scope>IDENTIFICATION IN THE PNUTS-PP1 PHOSPHATASE COMPLEX</scope>
    <scope>INTERACTION WITH WDR82; PPP1R8 AND PPP1R10/PNUTS</scope>
</reference>
<reference key="34">
    <citation type="journal article" date="2010" name="Sci. Signal.">
        <title>SUMOylation of the transcriptional co-repressor KAP1 is regulated by the serine and threonine phosphatase PP1.</title>
        <authorList>
            <person name="Li X."/>
            <person name="Lin H.H."/>
            <person name="Chen H."/>
            <person name="Xu X."/>
            <person name="Shih H.M."/>
            <person name="Ann D.K."/>
        </authorList>
    </citation>
    <scope>INTERACTION WITH TRIM28</scope>
</reference>
<reference key="35">
    <citation type="journal article" date="2011" name="PLoS ONE">
        <title>Protein phosphatase 1 (PP1) is a post-translational regulator of the mammalian circadian clock.</title>
        <authorList>
            <person name="Schmutz I."/>
            <person name="Wendt S."/>
            <person name="Schnell A."/>
            <person name="Kramer A."/>
            <person name="Mansuy I.M."/>
            <person name="Albrecht U."/>
        </authorList>
    </citation>
    <scope>FUNCTION IN CIRCADIAN CLOCK</scope>
</reference>
<reference key="36">
    <citation type="journal article" date="2012" name="Biol. Open">
        <title>Taperin (c9orf75), a mutated gene in nonsyndromic deafness, encodes a vertebrate specific, nuclear localized protein phosphatase one alpha (PP1alpha) docking protein.</title>
        <authorList>
            <person name="Ferrar T."/>
            <person name="Chamousset D."/>
            <person name="De Wever V."/>
            <person name="Nimick M."/>
            <person name="Andersen J."/>
            <person name="Trinkle-Mulcahy L."/>
            <person name="Moorhead G.B."/>
        </authorList>
    </citation>
    <scope>INTERACTION WITH TPRN</scope>
</reference>
<reference key="37">
    <citation type="journal article" date="2013" name="Nature">
        <title>Temporal regulation of EGF signalling networks by the scaffold protein Shc1.</title>
        <authorList>
            <person name="Zheng Y."/>
            <person name="Zhang C."/>
            <person name="Croucher D.R."/>
            <person name="Soliman M.A."/>
            <person name="St-Denis N."/>
            <person name="Pasculescu A."/>
            <person name="Taylor L."/>
            <person name="Tate S.A."/>
            <person name="Hardy W.R."/>
            <person name="Colwill K."/>
            <person name="Dai A.Y."/>
            <person name="Bagshaw R."/>
            <person name="Dennis J.W."/>
            <person name="Gingras A.C."/>
            <person name="Daly R.J."/>
            <person name="Pawson T."/>
        </authorList>
    </citation>
    <scope>INTERACTION WITH PEAK1</scope>
    <scope>PPP1CC AND SHC1</scope>
    <scope>IDENTIFICATION BY MASS SPECTROMETRY</scope>
</reference>
<reference key="38">
    <citation type="journal article" date="2013" name="Nat. Med.">
        <title>Phosphorylation of FOXP3 controls regulatory T cell function and is inhibited by TNF-alpha in rheumatoid arthritis.</title>
        <authorList>
            <person name="Nie H."/>
            <person name="Zheng Y."/>
            <person name="Li R."/>
            <person name="Guo T.B."/>
            <person name="He D."/>
            <person name="Fang L."/>
            <person name="Liu X."/>
            <person name="Xiao L."/>
            <person name="Chen X."/>
            <person name="Wan B."/>
            <person name="Chin Y.E."/>
            <person name="Zhang J.Z."/>
        </authorList>
    </citation>
    <scope>FUNCTION</scope>
    <scope>INTERACTION WITH FOXP3</scope>
    <scope>INDUCTION</scope>
</reference>
<reference key="39">
    <citation type="journal article" date="2013" name="Immunity">
        <title>Dephosphorylation of the RNA sensors RIG-I and MDA5 by the phosphatase PP1 is essential for innate immune signaling.</title>
        <authorList>
            <person name="Wies E."/>
            <person name="Wang M.K."/>
            <person name="Maharaj N.P."/>
            <person name="Chen K."/>
            <person name="Zhou S."/>
            <person name="Finberg R.W."/>
            <person name="Gack M.U."/>
        </authorList>
    </citation>
    <scope>FUNCTION</scope>
</reference>
<reference key="40">
    <citation type="journal article" date="2015" name="Autophagy">
        <title>ATG16L1 phosphorylation is oppositely regulated by CSNK2/casein kinase 2 and PPP1/protein phosphatase 1 which determines the fate of cardiomyocytes during hypoxia/reoxygenation.</title>
        <authorList>
            <person name="Song H."/>
            <person name="Pu J."/>
            <person name="Wang L."/>
            <person name="Wu L."/>
            <person name="Xiao J."/>
            <person name="Liu Q."/>
            <person name="Chen J."/>
            <person name="Zhang M."/>
            <person name="Liu Y."/>
            <person name="Ni M."/>
            <person name="Mo J."/>
            <person name="Zheng Y."/>
            <person name="Wan D."/>
            <person name="Cai X."/>
            <person name="Cao Y."/>
            <person name="Xiao W."/>
            <person name="Ye L."/>
            <person name="Tu E."/>
            <person name="Lin Z."/>
            <person name="Wen J."/>
            <person name="Lu X."/>
            <person name="He J."/>
            <person name="Peng Y."/>
            <person name="Su J."/>
            <person name="Zhang H."/>
            <person name="Zhao Y."/>
            <person name="Lin M."/>
            <person name="Zhang Z."/>
        </authorList>
    </citation>
    <scope>FUNCTION</scope>
    <scope>CATALYTIC ACTIVITY</scope>
    <scope>INTERACTION WITH ATG16L1</scope>
</reference>
<reference key="41">
    <citation type="journal article" date="2015" name="Dev. Cell">
        <title>Dynamic phosphorylation of CENP-A at Ser68 orchestrates its cell-cycle-dependent deposition at centromeres.</title>
        <authorList>
            <person name="Yu Z."/>
            <person name="Zhou X."/>
            <person name="Wang W."/>
            <person name="Deng W."/>
            <person name="Fang J."/>
            <person name="Hu H."/>
            <person name="Wang Z."/>
            <person name="Li S."/>
            <person name="Cui L."/>
            <person name="Shen J."/>
            <person name="Zhai L."/>
            <person name="Peng S."/>
            <person name="Wong J."/>
            <person name="Dong S."/>
            <person name="Yuan Z."/>
            <person name="Ou G."/>
            <person name="Zhang X."/>
            <person name="Xu P."/>
            <person name="Lou J."/>
            <person name="Yang N."/>
            <person name="Chen P."/>
            <person name="Xu R.M."/>
            <person name="Li G."/>
        </authorList>
    </citation>
    <scope>FUNCTION</scope>
    <scope>INTERACTION WITH CENPA</scope>
</reference>
<reference key="42">
    <citation type="journal article" date="2015" name="Proteomics">
        <title>N-terminome analysis of the human mitochondrial proteome.</title>
        <authorList>
            <person name="Vaca Jacome A.S."/>
            <person name="Rabilloud T."/>
            <person name="Schaeffer-Reiss C."/>
            <person name="Rompais M."/>
            <person name="Ayoub D."/>
            <person name="Lane L."/>
            <person name="Bairoch A."/>
            <person name="Van Dorsselaer A."/>
            <person name="Carapito C."/>
        </authorList>
    </citation>
    <scope>IDENTIFICATION BY MASS SPECTROMETRY [LARGE SCALE ANALYSIS]</scope>
</reference>
<reference key="43">
    <citation type="journal article" date="2016" name="Elife">
        <title>The human SKA complex drives the metaphase-anaphase cell cycle transition by recruiting protein phosphatase 1 to kinetochores.</title>
        <authorList>
            <person name="Sivakumar S."/>
            <person name="Janczyk P.L."/>
            <person name="Qu Q."/>
            <person name="Brautigam C.A."/>
            <person name="Stukenberg P.T."/>
            <person name="Yu H."/>
            <person name="Gorbsky G.J."/>
        </authorList>
    </citation>
    <scope>INTERACTION WITH SKA1</scope>
</reference>
<reference key="44">
    <citation type="journal article" date="2017" name="Mol. Cell">
        <title>NBS1 phosphorylation status dictates repair choice of dysfunctional telomeres.</title>
        <authorList>
            <person name="Rai R."/>
            <person name="Hu C."/>
            <person name="Broton C."/>
            <person name="Chen Y."/>
            <person name="Lei M."/>
            <person name="Chang S."/>
        </authorList>
    </citation>
    <scope>FUNCTION</scope>
    <scope>CATALYTIC ACTIVITY</scope>
</reference>
<reference key="45">
    <citation type="journal article" date="2018" name="J. Virol.">
        <title>Protein phosphatase 1alpha interacts with Venezuelan equine encephalitis virus capsid protein and regulates viral replication through modulation of capsid phosphorylation.</title>
        <authorList>
            <person name="Carey B.D."/>
            <person name="Ammosova T."/>
            <person name="Pinkham C."/>
            <person name="Lin X."/>
            <person name="Zhou W."/>
            <person name="Liotta L.A."/>
            <person name="Nekhai S."/>
            <person name="Kehn-Hall K."/>
        </authorList>
    </citation>
    <scope>INTERACTION WITH VENEZUELAN EQUINE ENCEPHALITIS VIRUS CAPSID PROTEIN (MICROBIAL INFECTION)</scope>
    <scope>SUBCELLULAR LOCATION (MICROBIAL INFECTION)</scope>
    <scope>FUNCTION (MICROBIAL INFECTION)</scope>
</reference>
<reference key="46">
    <citation type="journal article" date="2018" name="Nat. Commun.">
        <title>MYC dephosphorylation by the PP1/PNUTS phosphatase complex regulates chromatin binding and protein stability.</title>
        <authorList>
            <person name="Dingar D."/>
            <person name="Tu W.B."/>
            <person name="Resetca D."/>
            <person name="Lourenco C."/>
            <person name="Tamachi A."/>
            <person name="De Melo J."/>
            <person name="Houlahan K.E."/>
            <person name="Kalkat M."/>
            <person name="Chan P.K."/>
            <person name="Boutros P.C."/>
            <person name="Raught B."/>
            <person name="Penn L.Z."/>
        </authorList>
    </citation>
    <scope>FUNCTION</scope>
</reference>
<reference key="47">
    <citation type="journal article" date="2019" name="Mol. Cell">
        <title>Control of RNA Pol II speed by PNUTS-PP1 and Spt5 dephosphorylation facilitates termination by a 'sitting duck torpedo' mechanism.</title>
        <authorList>
            <person name="Cortazar M.A."/>
            <person name="Sheridan R.M."/>
            <person name="Erickson B."/>
            <person name="Fong N."/>
            <person name="Glover-Cutter K."/>
            <person name="Brannan K."/>
            <person name="Bentley D.L."/>
        </authorList>
    </citation>
    <scope>FUNCTION</scope>
    <scope>IDENTIFICATION IN THE PNUTS-PP1 PHOSPHATASE COMPLEX</scope>
    <scope>CATALYTIC ACTIVITY</scope>
</reference>
<reference key="48">
    <citation type="journal article" date="2020" name="Cell Rep.">
        <title>WDR82/PNUTS-PP1 prevents transcription-replication conflicts by promoting RNA polymerase II degradation on chromatin.</title>
        <authorList>
            <person name="Landsverk H.B."/>
            <person name="Sandquist L.E."/>
            <person name="Bay L.T.E."/>
            <person name="Steurer B."/>
            <person name="Campsteijn C."/>
            <person name="Landsverk O.J.B."/>
            <person name="Marteijn J.A."/>
            <person name="Petermann E."/>
            <person name="Trinkle-Mulcahy L."/>
            <person name="Syljuaasen R.G."/>
        </authorList>
    </citation>
    <scope>FUNCTION</scope>
    <scope>IDENTIFICATION IN THE PNUTS-PP1 PHOSPHATASE COMPLEX</scope>
    <scope>CATALYTIC ACTIVITY</scope>
</reference>
<reference key="49">
    <citation type="journal article" date="2024" name="Mol. Cell">
        <title>The phosphatase PP1 sustains global transcription by promoting RNA polymerase II pause release.</title>
        <authorList>
            <person name="Wang Z."/>
            <person name="Song A."/>
            <person name="Tao B."/>
            <person name="Miao M."/>
            <person name="Luo Y.Q."/>
            <person name="Wang J."/>
            <person name="Yin Z."/>
            <person name="Xiao R."/>
            <person name="Zhou X."/>
            <person name="Shang X.Y."/>
            <person name="Hu S."/>
            <person name="Liang K."/>
            <person name="Danko C.G."/>
            <person name="Chen F.X."/>
        </authorList>
    </citation>
    <scope>FUNCTION</scope>
    <scope>IDENTIFICATION IN THE PNUTS-PP1 PHOSPHATASE COMPLEX</scope>
    <scope>CATALYTIC ACTIVITY</scope>
</reference>
<reference key="50">
    <citation type="journal article" date="2024" name="Mol. Cell">
        <title>The PNUTS phosphatase complex controls transcription pause release.</title>
        <authorList>
            <person name="Kelley J.R."/>
            <person name="Dimitrova E."/>
            <person name="Maciuszek M."/>
            <person name="Nguyen H.T."/>
            <person name="Szczurek A.T."/>
            <person name="Hughes A.L."/>
            <person name="Blackledge N.P."/>
            <person name="Kettenbach A.N."/>
            <person name="Klose R.J."/>
        </authorList>
    </citation>
    <scope>FUNCTION</scope>
    <scope>IDENTIFICATION IN THE PNUTS-PP1 PHOSPHATASE COMPLEX</scope>
    <scope>CATALYTIC ACTIVITY</scope>
</reference>
<reference key="51">
    <citation type="journal article" date="2009" name="J. Mol. Biol.">
        <title>Crystal structures of protein phosphatase-1 bound to nodularin-R and tautomycin: a novel scaffold for structure-based drug design of serine/threonine phosphatase inhibitors.</title>
        <authorList>
            <person name="Kelker M.S."/>
            <person name="Page R."/>
            <person name="Peti W."/>
        </authorList>
    </citation>
    <scope>X-RAY CRYSTALLOGRAPHY (1.63 ANGSTROMS) OF 7-300 IN COMPLEX WITH INHIBITORS</scope>
    <scope>COFACTOR</scope>
    <scope>MANGANESE-BINDING SITES</scope>
    <scope>SUBUNIT</scope>
</reference>
<reference key="52">
    <citation type="journal article" date="2010" name="Nat. Struct. Mol. Biol.">
        <title>Spinophilin directs protein phosphatase 1 specificity by blocking substrate binding sites.</title>
        <authorList>
            <person name="Ragusa M.J."/>
            <person name="Dancheck B."/>
            <person name="Critton D.A."/>
            <person name="Nairn A.C."/>
            <person name="Page R."/>
            <person name="Peti W."/>
        </authorList>
    </citation>
    <scope>X-RAY CRYSTALLOGRAPHY (1.85 ANGSTROMS) OF 7-330 IN COMPLEX WITH RAT PPP1R9A AND PPP1R9B</scope>
</reference>
<reference evidence="50 51" key="53">
    <citation type="journal article" date="2014" name="Proc. Natl. Acad. Sci. U.S.A.">
        <title>Understanding the antagonism of retinoblastoma protein dephosphorylation by PNUTS provides insights into the PP1 regulatory code.</title>
        <authorList>
            <person name="Choy M.S."/>
            <person name="Hieke M."/>
            <person name="Kumar G.S."/>
            <person name="Lewis G.R."/>
            <person name="Gonzalez-DeWhitt K.R."/>
            <person name="Kessler R.P."/>
            <person name="Stein B.J."/>
            <person name="Stein B.J."/>
            <person name="Hessenberger M."/>
            <person name="Nairn A.C."/>
            <person name="Peti W."/>
            <person name="Page R."/>
        </authorList>
    </citation>
    <scope>X-RAY CRYSTALLOGRAPHY (2.10 ANGSTROMS) OF 394-433 IN COMPLEX WITH RAT PPP1R10</scope>
</reference>
<reference evidence="52" key="54">
    <citation type="journal article" date="2015" name="Cell Rep.">
        <title>Structural and Functional Analysis of the GADD34:PP1 eIF2alpha Phosphatase.</title>
        <authorList>
            <person name="Choy M.S."/>
            <person name="Yusoff P."/>
            <person name="Lee I.C."/>
            <person name="Newton J.C."/>
            <person name="Goh C.W."/>
            <person name="Page R."/>
            <person name="Shenolikar S."/>
            <person name="Peti W."/>
        </authorList>
    </citation>
    <scope>X-RAY CRYSTALLOGRAPHY (2.29 ANGSTROMS) OF 552-591</scope>
    <scope>INTERACTION WITH PPP1R15A</scope>
</reference>
<reference evidence="53" key="55">
    <citation type="journal article" date="2018" name="Structure">
        <title>KNL1 Binding to PP1 and Microtubules Is Mutually Exclusive.</title>
        <authorList>
            <person name="Bajaj R."/>
            <person name="Bollen M."/>
            <person name="Peti W."/>
            <person name="Page R."/>
        </authorList>
    </citation>
    <scope>X-RAY CRYSTALLOGRAPHY (2.95 ANGSTROMS) OF 7-300 IN COMPLEX WITH MN(2+) AND KNL1</scope>
    <scope>COFACTOR</scope>
    <scope>INTERACTION WITH KNL1</scope>
</reference>
<reference key="56">
    <citation type="journal article" date="2022" name="Nature">
        <title>Structural basis for SHOC2 modulation of RAS signalling.</title>
        <authorList>
            <person name="Liau N.P.D."/>
            <person name="Johnson M.C."/>
            <person name="Izadi S."/>
            <person name="Gerosa L."/>
            <person name="Hammel M."/>
            <person name="Bruning J.M."/>
            <person name="Wendorff T.J."/>
            <person name="Phung W."/>
            <person name="Hymowitz S.G."/>
            <person name="Sudhamsu J."/>
        </authorList>
    </citation>
    <scope>FUNCTION</scope>
    <scope>CATALYTIC ACTIVITY</scope>
    <scope>INTERACTION WITH SHOC2; MRAS; KRAS; NRAS AND HRAS</scope>
</reference>
<reference evidence="54" key="57">
    <citation type="journal article" date="2022" name="Nat. Struct. Mol. Biol.">
        <title>Structure of the SHOC2-MRAS-PP1c complex provides insights into RAF activation and Noonan syndrome.</title>
        <authorList>
            <person name="Bonsor D.A."/>
            <person name="Alexander P."/>
            <person name="Snead K."/>
            <person name="Hartig N."/>
            <person name="Drew M."/>
            <person name="Messing S."/>
            <person name="Finci L.I."/>
            <person name="Nissley D.V."/>
            <person name="McCormick F."/>
            <person name="Esposito D."/>
            <person name="Rodriguez-Viciana P."/>
            <person name="Stephen A.G."/>
            <person name="Simanshu D.K."/>
        </authorList>
    </citation>
    <scope>X-RAY CRYSTALLOGRAPHY (2.17 ANGSTROMS) OF 2-330 IN COMPLEX WITH MN(2+); SHOC2 AND MRAS</scope>
    <scope>FUNCTION</scope>
    <scope>CATALYTIC ACTIVITY</scope>
    <scope>COFACTOR</scope>
    <scope>INTERACTION WITH SHOC2; MRAS; KRAS; NRAS AND HRAS</scope>
    <scope>MUTAGENESIS OF PRO-50; ALA-57; GLU-184 AND ARG-188</scope>
</reference>
<reference evidence="56" key="58">
    <citation type="journal article" date="2022" name="Nature">
        <title>Structure-function analysis of the SHOC2-MRAS-PP1c holophosphatase complex.</title>
        <authorList>
            <person name="Kwon J.J."/>
            <person name="Hajian B."/>
            <person name="Bian Y."/>
            <person name="Young L.C."/>
            <person name="Amor A.J."/>
            <person name="Fuller J.R."/>
            <person name="Fraley C.V."/>
            <person name="Sykes A.M."/>
            <person name="So J."/>
            <person name="Pan J."/>
            <person name="Baker L."/>
            <person name="Lee S.J."/>
            <person name="Wheeler D.B."/>
            <person name="Mayhew D.L."/>
            <person name="Persky N.S."/>
            <person name="Yang X."/>
            <person name="Root D.E."/>
            <person name="Barsotti A.M."/>
            <person name="Stamford A.W."/>
            <person name="Perry C.K."/>
            <person name="Burgin A."/>
            <person name="McCormick F."/>
            <person name="Lemke C.T."/>
            <person name="Hahn W.C."/>
            <person name="Aguirre A.J."/>
        </authorList>
    </citation>
    <scope>STRUCTURE BY ELECTRON MICROSCOPY (2.89 ANGSTROMS) IN COMPLEX WITH MN(2+); SHOC2 AND MRAS</scope>
    <scope>FUNCTION</scope>
    <scope>CATALYTIC ACTIVITY</scope>
    <scope>COFACTOR</scope>
    <scope>INTERACTION WITH SHOC2; MRAS; KRAS; NRAS AND HRAS</scope>
    <scope>MUTAGENESIS OF PRO-50</scope>
</reference>
<reference evidence="55" key="59">
    <citation type="journal article" date="2022" name="Nature">
        <title>Structure of the MRAS-SHOC2-PP1C phosphatase complex.</title>
        <authorList>
            <person name="Hauseman Z.J."/>
            <person name="Fodor M."/>
            <person name="Dhembi A."/>
            <person name="Viscomi J."/>
            <person name="Egli D."/>
            <person name="Bleu M."/>
            <person name="Katz S."/>
            <person name="Park E."/>
            <person name="Jang D.M."/>
            <person name="Porter K.A."/>
            <person name="Meili F."/>
            <person name="Guo H."/>
            <person name="Kerr G."/>
            <person name="Molle S."/>
            <person name="Velez-Vega C."/>
            <person name="Beyer K.S."/>
            <person name="Galli G.G."/>
            <person name="Maira S.M."/>
            <person name="Stams T."/>
            <person name="Clark K."/>
            <person name="Eck M.J."/>
            <person name="Tordella L."/>
            <person name="Thoma C.R."/>
            <person name="King D.A."/>
        </authorList>
    </citation>
    <scope>X-RAY CRYSTALLOGRAPHY (1.95 ANGSTROMS) OF 7-300 IN COMPLEX WITH MN(2+); SHOC2 AND MRAS</scope>
    <scope>FUNCTION</scope>
    <scope>CATALYTIC ACTIVITY</scope>
    <scope>COFACTOR</scope>
    <scope>INTERACTION WITH SHOC2; MRAS; KRAS AND NRAS</scope>
    <scope>MUTAGENESIS OF PRO-50</scope>
</reference>
<reference evidence="57" key="60">
    <citation type="journal article" date="2024" name="Proc. Natl. Acad. Sci. U.S.A.">
        <title>A protein phosphatase 1 specific phosphatase targeting peptide (PhosTAP) to identify the PP1 phosphatome.</title>
        <authorList>
            <person name="Choy M.S."/>
            <person name="Nguyen H.T."/>
            <person name="Kumar G.S."/>
            <person name="Peti W."/>
            <person name="Kettenbach A.N."/>
            <person name="Page R."/>
        </authorList>
    </citation>
    <scope>X-RAY CRYSTALLOGRAPHY (2.39 ANGSTROMS) OF 391-424 IN COMPLEX WITH PPP1R10</scope>
    <scope>INTERACTION WITH PPP1R10</scope>
</reference>
<keyword id="KW-0002">3D-structure</keyword>
<keyword id="KW-0007">Acetylation</keyword>
<keyword id="KW-0025">Alternative splicing</keyword>
<keyword id="KW-0119">Carbohydrate metabolism</keyword>
<keyword id="KW-0131">Cell cycle</keyword>
<keyword id="KW-0132">Cell division</keyword>
<keyword id="KW-0963">Cytoplasm</keyword>
<keyword id="KW-0903">Direct protein sequencing</keyword>
<keyword id="KW-0321">Glycogen metabolism</keyword>
<keyword id="KW-0945">Host-virus interaction</keyword>
<keyword id="KW-0378">Hydrolase</keyword>
<keyword id="KW-0464">Manganese</keyword>
<keyword id="KW-0479">Metal-binding</keyword>
<keyword id="KW-0539">Nucleus</keyword>
<keyword id="KW-0597">Phosphoprotein</keyword>
<keyword id="KW-0904">Protein phosphatase</keyword>
<keyword id="KW-1267">Proteomics identification</keyword>
<keyword id="KW-1185">Reference proteome</keyword>
<dbReference type="EC" id="3.1.3.16" evidence="31 39 40 41 42"/>
<dbReference type="EMBL" id="X70848">
    <property type="protein sequence ID" value="CAA50197.1"/>
    <property type="molecule type" value="mRNA"/>
</dbReference>
<dbReference type="EMBL" id="S57501">
    <property type="protein sequence ID" value="AAB26015.1"/>
    <property type="molecule type" value="mRNA"/>
</dbReference>
<dbReference type="EMBL" id="M63960">
    <property type="protein sequence ID" value="AAA36508.1"/>
    <property type="molecule type" value="mRNA"/>
</dbReference>
<dbReference type="EMBL" id="AK313586">
    <property type="protein sequence ID" value="BAG36355.1"/>
    <property type="molecule type" value="mRNA"/>
</dbReference>
<dbReference type="EMBL" id="BT006629">
    <property type="protein sequence ID" value="AAP35275.1"/>
    <property type="molecule type" value="mRNA"/>
</dbReference>
<dbReference type="EMBL" id="AP003419">
    <property type="status" value="NOT_ANNOTATED_CDS"/>
    <property type="molecule type" value="Genomic_DNA"/>
</dbReference>
<dbReference type="EMBL" id="BC001888">
    <property type="protein sequence ID" value="AAH01888.1"/>
    <property type="molecule type" value="mRNA"/>
</dbReference>
<dbReference type="EMBL" id="BC004482">
    <property type="protein sequence ID" value="AAH04482.1"/>
    <property type="molecule type" value="mRNA"/>
</dbReference>
<dbReference type="EMBL" id="BC008010">
    <property type="protein sequence ID" value="AAH08010.1"/>
    <property type="molecule type" value="mRNA"/>
</dbReference>
<dbReference type="EMBL" id="J04759">
    <property type="protein sequence ID" value="AAA36475.1"/>
    <property type="molecule type" value="mRNA"/>
</dbReference>
<dbReference type="CCDS" id="CCDS31618.1">
    <molecule id="P62136-2"/>
</dbReference>
<dbReference type="CCDS" id="CCDS8160.1">
    <molecule id="P62136-1"/>
</dbReference>
<dbReference type="CCDS" id="CCDS8161.1">
    <molecule id="P62136-3"/>
</dbReference>
<dbReference type="RefSeq" id="NP_001008709.1">
    <molecule id="P62136-2"/>
    <property type="nucleotide sequence ID" value="NM_001008709.2"/>
</dbReference>
<dbReference type="RefSeq" id="NP_002699.1">
    <molecule id="P62136-1"/>
    <property type="nucleotide sequence ID" value="NM_002708.4"/>
</dbReference>
<dbReference type="RefSeq" id="NP_996756.1">
    <molecule id="P62136-3"/>
    <property type="nucleotide sequence ID" value="NM_206873.2"/>
</dbReference>
<dbReference type="PDB" id="3E7A">
    <property type="method" value="X-ray"/>
    <property type="resolution" value="1.63 A"/>
    <property type="chains" value="A/B=7-300"/>
</dbReference>
<dbReference type="PDB" id="3E7B">
    <property type="method" value="X-ray"/>
    <property type="resolution" value="1.70 A"/>
    <property type="chains" value="A/B=7-300"/>
</dbReference>
<dbReference type="PDB" id="3EGG">
    <property type="method" value="X-ray"/>
    <property type="resolution" value="1.85 A"/>
    <property type="chains" value="A/B=7-330"/>
</dbReference>
<dbReference type="PDB" id="3EGH">
    <property type="method" value="X-ray"/>
    <property type="resolution" value="2.00 A"/>
    <property type="chains" value="A/B=7-330"/>
</dbReference>
<dbReference type="PDB" id="3HVQ">
    <property type="method" value="X-ray"/>
    <property type="resolution" value="2.20 A"/>
    <property type="chains" value="A/B=7-330"/>
</dbReference>
<dbReference type="PDB" id="3N5U">
    <property type="method" value="X-ray"/>
    <property type="resolution" value="3.20 A"/>
    <property type="chains" value="A/B=1-300"/>
</dbReference>
<dbReference type="PDB" id="3V4Y">
    <property type="method" value="X-ray"/>
    <property type="resolution" value="2.10 A"/>
    <property type="chains" value="A/C/E/G=7-307"/>
</dbReference>
<dbReference type="PDB" id="4G9J">
    <property type="method" value="X-ray"/>
    <property type="resolution" value="3.10 A"/>
    <property type="chains" value="A/B=1-330"/>
</dbReference>
<dbReference type="PDB" id="4MOV">
    <property type="method" value="X-ray"/>
    <property type="resolution" value="1.45 A"/>
    <property type="chains" value="A/B=7-300"/>
</dbReference>
<dbReference type="PDB" id="4MOY">
    <property type="method" value="X-ray"/>
    <property type="resolution" value="2.20 A"/>
    <property type="chains" value="A=7-300"/>
</dbReference>
<dbReference type="PDB" id="4MP0">
    <property type="method" value="X-ray"/>
    <property type="resolution" value="2.10 A"/>
    <property type="chains" value="A/C=7-300"/>
</dbReference>
<dbReference type="PDB" id="4XPN">
    <property type="method" value="X-ray"/>
    <property type="resolution" value="2.29 A"/>
    <property type="chains" value="A/C=7-300"/>
</dbReference>
<dbReference type="PDB" id="5IOH">
    <property type="method" value="X-ray"/>
    <property type="resolution" value="2.57 A"/>
    <property type="chains" value="A/C=7-300"/>
</dbReference>
<dbReference type="PDB" id="6ALZ">
    <property type="method" value="X-ray"/>
    <property type="resolution" value="2.21 A"/>
    <property type="chains" value="A/B=7-300"/>
</dbReference>
<dbReference type="PDB" id="6CZO">
    <property type="method" value="X-ray"/>
    <property type="resolution" value="2.95 A"/>
    <property type="chains" value="A/C=7-300"/>
</dbReference>
<dbReference type="PDB" id="6DCX">
    <property type="method" value="X-ray"/>
    <property type="resolution" value="3.41 A"/>
    <property type="chains" value="A/B=1-330"/>
</dbReference>
<dbReference type="PDB" id="6DNO">
    <property type="method" value="X-ray"/>
    <property type="resolution" value="1.45 A"/>
    <property type="chains" value="A=7-300"/>
</dbReference>
<dbReference type="PDB" id="6G0I">
    <property type="method" value="X-ray"/>
    <property type="resolution" value="2.00 A"/>
    <property type="chains" value="A=1-330"/>
</dbReference>
<dbReference type="PDB" id="6G0J">
    <property type="method" value="X-ray"/>
    <property type="resolution" value="2.10 A"/>
    <property type="chains" value="A=1-330"/>
</dbReference>
<dbReference type="PDB" id="6GHM">
    <property type="method" value="X-ray"/>
    <property type="resolution" value="2.15 A"/>
    <property type="chains" value="A/B=7-330"/>
</dbReference>
<dbReference type="PDB" id="6OBN">
    <property type="method" value="X-ray"/>
    <property type="resolution" value="2.70 A"/>
    <property type="chains" value="A/B=1-300"/>
</dbReference>
<dbReference type="PDB" id="6OBP">
    <property type="method" value="X-ray"/>
    <property type="resolution" value="2.70 A"/>
    <property type="chains" value="A=1-300"/>
</dbReference>
<dbReference type="PDB" id="6OBQ">
    <property type="method" value="X-ray"/>
    <property type="resolution" value="1.84 A"/>
    <property type="chains" value="A/B=7-300"/>
</dbReference>
<dbReference type="PDB" id="6OBR">
    <property type="method" value="X-ray"/>
    <property type="resolution" value="1.50 A"/>
    <property type="chains" value="A/B=7-300"/>
</dbReference>
<dbReference type="PDB" id="6OBS">
    <property type="method" value="X-ray"/>
    <property type="resolution" value="1.80 A"/>
    <property type="chains" value="A/B=7-300"/>
</dbReference>
<dbReference type="PDB" id="6OBU">
    <property type="method" value="X-ray"/>
    <property type="resolution" value="1.95 A"/>
    <property type="chains" value="A/B=7-300"/>
</dbReference>
<dbReference type="PDB" id="6ZEE">
    <property type="method" value="X-ray"/>
    <property type="resolution" value="1.90 A"/>
    <property type="chains" value="A/B/I/K/P/Q=7-300"/>
</dbReference>
<dbReference type="PDB" id="6ZEF">
    <property type="method" value="X-ray"/>
    <property type="resolution" value="1.94 A"/>
    <property type="chains" value="A/B=7-300"/>
</dbReference>
<dbReference type="PDB" id="6ZEG">
    <property type="method" value="X-ray"/>
    <property type="resolution" value="1.09 A"/>
    <property type="chains" value="A/B=7-304"/>
</dbReference>
<dbReference type="PDB" id="6ZEH">
    <property type="method" value="X-ray"/>
    <property type="resolution" value="1.30 A"/>
    <property type="chains" value="A/B=7-304"/>
</dbReference>
<dbReference type="PDB" id="6ZEI">
    <property type="method" value="X-ray"/>
    <property type="resolution" value="1.39 A"/>
    <property type="chains" value="A/B=7-304"/>
</dbReference>
<dbReference type="PDB" id="6ZEJ">
    <property type="method" value="X-ray"/>
    <property type="resolution" value="1.78 A"/>
    <property type="chains" value="A/D/F/I/L/O=7-304"/>
</dbReference>
<dbReference type="PDB" id="6ZK6">
    <property type="method" value="X-ray"/>
    <property type="resolution" value="1.90 A"/>
    <property type="chains" value="A=1-330"/>
</dbReference>
<dbReference type="PDB" id="7QFB">
    <property type="method" value="X-ray"/>
    <property type="resolution" value="2.05 A"/>
    <property type="chains" value="A=7-300"/>
</dbReference>
<dbReference type="PDB" id="7QM2">
    <property type="method" value="X-ray"/>
    <property type="resolution" value="2.69 A"/>
    <property type="chains" value="A/C=7-300"/>
</dbReference>
<dbReference type="PDB" id="7T0Y">
    <property type="method" value="X-ray"/>
    <property type="resolution" value="1.80 A"/>
    <property type="chains" value="A/C=7-300"/>
</dbReference>
<dbReference type="PDB" id="7TVF">
    <property type="method" value="X-ray"/>
    <property type="resolution" value="2.17 A"/>
    <property type="chains" value="C/F=2-330"/>
</dbReference>
<dbReference type="PDB" id="7TXH">
    <property type="method" value="X-ray"/>
    <property type="resolution" value="1.95 A"/>
    <property type="chains" value="C/F=7-300"/>
</dbReference>
<dbReference type="PDB" id="7UPI">
    <property type="method" value="EM"/>
    <property type="resolution" value="2.89 A"/>
    <property type="chains" value="B=1-330"/>
</dbReference>
<dbReference type="PDB" id="8DWK">
    <property type="method" value="X-ray"/>
    <property type="resolution" value="2.50 A"/>
    <property type="chains" value="A/B=7-300"/>
</dbReference>
<dbReference type="PDB" id="8DWL">
    <property type="method" value="X-ray"/>
    <property type="resolution" value="2.00 A"/>
    <property type="chains" value="A/C=7-300"/>
</dbReference>
<dbReference type="PDB" id="8SW5">
    <property type="method" value="X-ray"/>
    <property type="resolution" value="2.39 A"/>
    <property type="chains" value="A/B=7-300"/>
</dbReference>
<dbReference type="PDB" id="8SW6">
    <property type="method" value="X-ray"/>
    <property type="resolution" value="1.76 A"/>
    <property type="chains" value="A/B=7-300"/>
</dbReference>
<dbReference type="PDB" id="8U5G">
    <property type="method" value="X-ray"/>
    <property type="resolution" value="3.20 A"/>
    <property type="chains" value="A=7-300"/>
</dbReference>
<dbReference type="PDBsum" id="3E7A"/>
<dbReference type="PDBsum" id="3E7B"/>
<dbReference type="PDBsum" id="3EGG"/>
<dbReference type="PDBsum" id="3EGH"/>
<dbReference type="PDBsum" id="3HVQ"/>
<dbReference type="PDBsum" id="3N5U"/>
<dbReference type="PDBsum" id="3V4Y"/>
<dbReference type="PDBsum" id="4G9J"/>
<dbReference type="PDBsum" id="4MOV"/>
<dbReference type="PDBsum" id="4MOY"/>
<dbReference type="PDBsum" id="4MP0"/>
<dbReference type="PDBsum" id="4XPN"/>
<dbReference type="PDBsum" id="5IOH"/>
<dbReference type="PDBsum" id="6ALZ"/>
<dbReference type="PDBsum" id="6CZO"/>
<dbReference type="PDBsum" id="6DCX"/>
<dbReference type="PDBsum" id="6DNO"/>
<dbReference type="PDBsum" id="6G0I"/>
<dbReference type="PDBsum" id="6G0J"/>
<dbReference type="PDBsum" id="6GHM"/>
<dbReference type="PDBsum" id="6OBN"/>
<dbReference type="PDBsum" id="6OBP"/>
<dbReference type="PDBsum" id="6OBQ"/>
<dbReference type="PDBsum" id="6OBR"/>
<dbReference type="PDBsum" id="6OBS"/>
<dbReference type="PDBsum" id="6OBU"/>
<dbReference type="PDBsum" id="6ZEE"/>
<dbReference type="PDBsum" id="6ZEF"/>
<dbReference type="PDBsum" id="6ZEG"/>
<dbReference type="PDBsum" id="6ZEH"/>
<dbReference type="PDBsum" id="6ZEI"/>
<dbReference type="PDBsum" id="6ZEJ"/>
<dbReference type="PDBsum" id="6ZK6"/>
<dbReference type="PDBsum" id="7QFB"/>
<dbReference type="PDBsum" id="7QM2"/>
<dbReference type="PDBsum" id="7T0Y"/>
<dbReference type="PDBsum" id="7TVF"/>
<dbReference type="PDBsum" id="7TXH"/>
<dbReference type="PDBsum" id="7UPI"/>
<dbReference type="PDBsum" id="8DWK"/>
<dbReference type="PDBsum" id="8DWL"/>
<dbReference type="PDBsum" id="8SW5"/>
<dbReference type="PDBsum" id="8SW6"/>
<dbReference type="PDBsum" id="8U5G"/>
<dbReference type="EMDB" id="EMD-26667"/>
<dbReference type="SASBDB" id="P62136"/>
<dbReference type="SMR" id="P62136"/>
<dbReference type="BioGRID" id="111493">
    <property type="interactions" value="647"/>
</dbReference>
<dbReference type="ComplexPortal" id="CPX-25716">
    <property type="entry name" value="SHOC2-MRAS-PPP1CA complex"/>
</dbReference>
<dbReference type="CORUM" id="P62136"/>
<dbReference type="DIP" id="DIP-221N"/>
<dbReference type="DIP" id="DIP-38195N"/>
<dbReference type="ELM" id="P62136"/>
<dbReference type="FunCoup" id="P62136">
    <property type="interactions" value="3867"/>
</dbReference>
<dbReference type="IntAct" id="P62136">
    <property type="interactions" value="470"/>
</dbReference>
<dbReference type="MINT" id="P62136"/>
<dbReference type="STRING" id="9606.ENSP00000326031"/>
<dbReference type="BindingDB" id="P62136"/>
<dbReference type="ChEMBL" id="CHEMBL2164"/>
<dbReference type="DrugBank" id="DB02506">
    <property type="generic name" value="2,6,8-Trimethyl-3-Amino-9-Benzyl-9-Methoxynonanoic Acid"/>
</dbReference>
<dbReference type="DrugBank" id="DB12328">
    <property type="generic name" value="Cantharidin"/>
</dbReference>
<dbReference type="GuidetoPHARMACOLOGY" id="3264"/>
<dbReference type="MoonDB" id="P62136">
    <property type="type" value="Predicted"/>
</dbReference>
<dbReference type="DEPOD" id="PPP1CA"/>
<dbReference type="GlyGen" id="P62136">
    <property type="glycosylation" value="3 sites, 1 O-linked glycan (1 site)"/>
</dbReference>
<dbReference type="iPTMnet" id="P62136"/>
<dbReference type="PhosphoSitePlus" id="P62136"/>
<dbReference type="SwissPalm" id="P62136"/>
<dbReference type="BioMuta" id="PPP1CA"/>
<dbReference type="DMDM" id="49065811"/>
<dbReference type="OGP" id="P08129"/>
<dbReference type="jPOST" id="P62136"/>
<dbReference type="MassIVE" id="P62136"/>
<dbReference type="PaxDb" id="9606-ENSP00000326031"/>
<dbReference type="PeptideAtlas" id="P62136"/>
<dbReference type="PRIDE" id="P62136"/>
<dbReference type="ProteomicsDB" id="1632"/>
<dbReference type="ProteomicsDB" id="57365">
    <molecule id="P62136-1"/>
</dbReference>
<dbReference type="ProteomicsDB" id="57366">
    <molecule id="P62136-2"/>
</dbReference>
<dbReference type="Pumba" id="P62136"/>
<dbReference type="TopDownProteomics" id="P62136-1">
    <molecule id="P62136-1"/>
</dbReference>
<dbReference type="Antibodypedia" id="3872">
    <property type="antibodies" value="621 antibodies from 41 providers"/>
</dbReference>
<dbReference type="DNASU" id="5499"/>
<dbReference type="Ensembl" id="ENST00000312989.11">
    <molecule id="P62136-2"/>
    <property type="protein sequence ID" value="ENSP00000326031.7"/>
    <property type="gene ID" value="ENSG00000172531.16"/>
</dbReference>
<dbReference type="Ensembl" id="ENST00000358239.8">
    <molecule id="P62136-3"/>
    <property type="protein sequence ID" value="ENSP00000350974.4"/>
    <property type="gene ID" value="ENSG00000172531.16"/>
</dbReference>
<dbReference type="Ensembl" id="ENST00000376745.9">
    <molecule id="P62136-1"/>
    <property type="protein sequence ID" value="ENSP00000365936.4"/>
    <property type="gene ID" value="ENSG00000172531.16"/>
</dbReference>
<dbReference type="GeneID" id="5499"/>
<dbReference type="KEGG" id="hsa:5499"/>
<dbReference type="MANE-Select" id="ENST00000376745.9">
    <property type="protein sequence ID" value="ENSP00000365936.4"/>
    <property type="RefSeq nucleotide sequence ID" value="NM_002708.4"/>
    <property type="RefSeq protein sequence ID" value="NP_002699.1"/>
</dbReference>
<dbReference type="UCSC" id="uc001oku.2">
    <molecule id="P62136-1"/>
    <property type="organism name" value="human"/>
</dbReference>
<dbReference type="AGR" id="HGNC:9281"/>
<dbReference type="CTD" id="5499"/>
<dbReference type="DisGeNET" id="5499"/>
<dbReference type="GeneCards" id="PPP1CA"/>
<dbReference type="HGNC" id="HGNC:9281">
    <property type="gene designation" value="PPP1CA"/>
</dbReference>
<dbReference type="HPA" id="ENSG00000172531">
    <property type="expression patterns" value="Low tissue specificity"/>
</dbReference>
<dbReference type="MIM" id="176875">
    <property type="type" value="gene"/>
</dbReference>
<dbReference type="neXtProt" id="NX_P62136"/>
<dbReference type="OpenTargets" id="ENSG00000172531"/>
<dbReference type="PharmGKB" id="PA33609"/>
<dbReference type="VEuPathDB" id="HostDB:ENSG00000172531"/>
<dbReference type="eggNOG" id="KOG0374">
    <property type="taxonomic scope" value="Eukaryota"/>
</dbReference>
<dbReference type="GeneTree" id="ENSGT00940000153472"/>
<dbReference type="HOGENOM" id="CLU_004962_8_1_1"/>
<dbReference type="InParanoid" id="P62136"/>
<dbReference type="OMA" id="YLVMESR"/>
<dbReference type="OrthoDB" id="1930084at2759"/>
<dbReference type="PAN-GO" id="P62136">
    <property type="GO annotations" value="3 GO annotations based on evolutionary models"/>
</dbReference>
<dbReference type="PhylomeDB" id="P62136"/>
<dbReference type="TreeFam" id="TF354243"/>
<dbReference type="BRENDA" id="3.1.3.16">
    <property type="organism ID" value="2681"/>
</dbReference>
<dbReference type="PathwayCommons" id="P62136"/>
<dbReference type="Reactome" id="R-HSA-163560">
    <property type="pathway name" value="Triglyceride catabolism"/>
</dbReference>
<dbReference type="Reactome" id="R-HSA-180024">
    <property type="pathway name" value="DARPP-32 events"/>
</dbReference>
<dbReference type="Reactome" id="R-HSA-2173788">
    <property type="pathway name" value="Downregulation of TGF-beta receptor signaling"/>
</dbReference>
<dbReference type="Reactome" id="R-HSA-400253">
    <property type="pathway name" value="Circadian Clock"/>
</dbReference>
<dbReference type="Reactome" id="R-HSA-9828806">
    <property type="pathway name" value="Maturation of hRSV A proteins"/>
</dbReference>
<dbReference type="SignaLink" id="P62136"/>
<dbReference type="SIGNOR" id="P62136"/>
<dbReference type="BioGRID-ORCS" id="5499">
    <property type="hits" value="435 hits in 1183 CRISPR screens"/>
</dbReference>
<dbReference type="CD-CODE" id="8C2F96ED">
    <property type="entry name" value="Centrosome"/>
</dbReference>
<dbReference type="CD-CODE" id="91857CE7">
    <property type="entry name" value="Nucleolus"/>
</dbReference>
<dbReference type="CD-CODE" id="B5B9A610">
    <property type="entry name" value="PML body"/>
</dbReference>
<dbReference type="CD-CODE" id="FB4E32DD">
    <property type="entry name" value="Presynaptic clusters and postsynaptic densities"/>
</dbReference>
<dbReference type="ChiTaRS" id="PPP1CA">
    <property type="organism name" value="human"/>
</dbReference>
<dbReference type="EvolutionaryTrace" id="P62136"/>
<dbReference type="GeneWiki" id="PPP1CA"/>
<dbReference type="GenomeRNAi" id="5499"/>
<dbReference type="Pharos" id="P62136">
    <property type="development level" value="Tchem"/>
</dbReference>
<dbReference type="PRO" id="PR:P62136"/>
<dbReference type="Proteomes" id="UP000005640">
    <property type="component" value="Chromosome 11"/>
</dbReference>
<dbReference type="RNAct" id="P62136">
    <property type="molecule type" value="protein"/>
</dbReference>
<dbReference type="Bgee" id="ENSG00000172531">
    <property type="expression patterns" value="Expressed in endometrium epithelium and 203 other cell types or tissues"/>
</dbReference>
<dbReference type="ExpressionAtlas" id="P62136">
    <property type="expression patterns" value="baseline and differential"/>
</dbReference>
<dbReference type="GO" id="GO:0005912">
    <property type="term" value="C:adherens junction"/>
    <property type="evidence" value="ECO:0000314"/>
    <property type="project" value="BHF-UCL"/>
</dbReference>
<dbReference type="GO" id="GO:0005737">
    <property type="term" value="C:cytoplasm"/>
    <property type="evidence" value="ECO:0000314"/>
    <property type="project" value="UniProtKB"/>
</dbReference>
<dbReference type="GO" id="GO:0005829">
    <property type="term" value="C:cytosol"/>
    <property type="evidence" value="ECO:0000314"/>
    <property type="project" value="HPA"/>
</dbReference>
<dbReference type="GO" id="GO:0043197">
    <property type="term" value="C:dendritic spine"/>
    <property type="evidence" value="ECO:0007669"/>
    <property type="project" value="Ensembl"/>
</dbReference>
<dbReference type="GO" id="GO:0070062">
    <property type="term" value="C:extracellular exosome"/>
    <property type="evidence" value="ECO:0007005"/>
    <property type="project" value="UniProtKB"/>
</dbReference>
<dbReference type="GO" id="GO:0098978">
    <property type="term" value="C:glutamatergic synapse"/>
    <property type="evidence" value="ECO:0007669"/>
    <property type="project" value="Ensembl"/>
</dbReference>
<dbReference type="GO" id="GO:0042587">
    <property type="term" value="C:glycogen granule"/>
    <property type="evidence" value="ECO:0007669"/>
    <property type="project" value="Ensembl"/>
</dbReference>
<dbReference type="GO" id="GO:0005730">
    <property type="term" value="C:nucleolus"/>
    <property type="evidence" value="ECO:0007669"/>
    <property type="project" value="UniProtKB-SubCell"/>
</dbReference>
<dbReference type="GO" id="GO:0005654">
    <property type="term" value="C:nucleoplasm"/>
    <property type="evidence" value="ECO:0000314"/>
    <property type="project" value="HPA"/>
</dbReference>
<dbReference type="GO" id="GO:0005634">
    <property type="term" value="C:nucleus"/>
    <property type="evidence" value="ECO:0000314"/>
    <property type="project" value="UniProtKB"/>
</dbReference>
<dbReference type="GO" id="GO:0043204">
    <property type="term" value="C:perikaryon"/>
    <property type="evidence" value="ECO:0007669"/>
    <property type="project" value="Ensembl"/>
</dbReference>
<dbReference type="GO" id="GO:0005886">
    <property type="term" value="C:plasma membrane"/>
    <property type="evidence" value="ECO:0000314"/>
    <property type="project" value="HPA"/>
</dbReference>
<dbReference type="GO" id="GO:0098793">
    <property type="term" value="C:presynapse"/>
    <property type="evidence" value="ECO:0007669"/>
    <property type="project" value="Ensembl"/>
</dbReference>
<dbReference type="GO" id="GO:0000164">
    <property type="term" value="C:protein phosphatase type 1 complex"/>
    <property type="evidence" value="ECO:0000314"/>
    <property type="project" value="UniProtKB"/>
</dbReference>
<dbReference type="GO" id="GO:0072357">
    <property type="term" value="C:PTW/PP1 phosphatase complex"/>
    <property type="evidence" value="ECO:0000314"/>
    <property type="project" value="UniProtKB"/>
</dbReference>
<dbReference type="GO" id="GO:0098641">
    <property type="term" value="F:cadherin binding involved in cell-cell adhesion"/>
    <property type="evidence" value="ECO:0000314"/>
    <property type="project" value="BHF-UCL"/>
</dbReference>
<dbReference type="GO" id="GO:0005506">
    <property type="term" value="F:iron ion binding"/>
    <property type="evidence" value="ECO:0000314"/>
    <property type="project" value="UniProtKB"/>
</dbReference>
<dbReference type="GO" id="GO:0016791">
    <property type="term" value="F:phosphatase activity"/>
    <property type="evidence" value="ECO:0000250"/>
    <property type="project" value="UniProtKB"/>
</dbReference>
<dbReference type="GO" id="GO:0004721">
    <property type="term" value="F:phosphoprotein phosphatase activity"/>
    <property type="evidence" value="ECO:0000250"/>
    <property type="project" value="ParkinsonsUK-UCL"/>
</dbReference>
<dbReference type="GO" id="GO:0008157">
    <property type="term" value="F:protein phosphatase 1 binding"/>
    <property type="evidence" value="ECO:0007669"/>
    <property type="project" value="Ensembl"/>
</dbReference>
<dbReference type="GO" id="GO:0004722">
    <property type="term" value="F:protein serine/threonine phosphatase activity"/>
    <property type="evidence" value="ECO:0000314"/>
    <property type="project" value="UniProtKB"/>
</dbReference>
<dbReference type="GO" id="GO:0043021">
    <property type="term" value="F:ribonucleoprotein complex binding"/>
    <property type="evidence" value="ECO:0007669"/>
    <property type="project" value="Ensembl"/>
</dbReference>
<dbReference type="GO" id="GO:0180007">
    <property type="term" value="F:RNA polymerase II CTD heptapeptide repeat S5 phosphatase activity"/>
    <property type="evidence" value="ECO:0000314"/>
    <property type="project" value="UniProtKB"/>
</dbReference>
<dbReference type="GO" id="GO:0046914">
    <property type="term" value="F:transition metal ion binding"/>
    <property type="evidence" value="ECO:0000314"/>
    <property type="project" value="UniProtKB"/>
</dbReference>
<dbReference type="GO" id="GO:0048754">
    <property type="term" value="P:branching morphogenesis of an epithelial tube"/>
    <property type="evidence" value="ECO:0007669"/>
    <property type="project" value="Ensembl"/>
</dbReference>
<dbReference type="GO" id="GO:0051301">
    <property type="term" value="P:cell division"/>
    <property type="evidence" value="ECO:0007669"/>
    <property type="project" value="UniProtKB-KW"/>
</dbReference>
<dbReference type="GO" id="GO:0032922">
    <property type="term" value="P:circadian regulation of gene expression"/>
    <property type="evidence" value="ECO:0000250"/>
    <property type="project" value="UniProtKB"/>
</dbReference>
<dbReference type="GO" id="GO:0016311">
    <property type="term" value="P:dephosphorylation"/>
    <property type="evidence" value="ECO:0000314"/>
    <property type="project" value="CACAO"/>
</dbReference>
<dbReference type="GO" id="GO:0043153">
    <property type="term" value="P:entrainment of circadian clock by photoperiod"/>
    <property type="evidence" value="ECO:0000250"/>
    <property type="project" value="UniProtKB"/>
</dbReference>
<dbReference type="GO" id="GO:0005977">
    <property type="term" value="P:glycogen metabolic process"/>
    <property type="evidence" value="ECO:0007669"/>
    <property type="project" value="UniProtKB-KW"/>
</dbReference>
<dbReference type="GO" id="GO:0030324">
    <property type="term" value="P:lung development"/>
    <property type="evidence" value="ECO:0007669"/>
    <property type="project" value="Ensembl"/>
</dbReference>
<dbReference type="GO" id="GO:0034244">
    <property type="term" value="P:negative regulation of transcription elongation by RNA polymerase II"/>
    <property type="evidence" value="ECO:0000314"/>
    <property type="project" value="UniProtKB"/>
</dbReference>
<dbReference type="GO" id="GO:2001241">
    <property type="term" value="P:positive regulation of extrinsic apoptotic signaling pathway in absence of ligand"/>
    <property type="evidence" value="ECO:0007669"/>
    <property type="project" value="Ensembl"/>
</dbReference>
<dbReference type="GO" id="GO:0045725">
    <property type="term" value="P:positive regulation of glycogen biosynthetic process"/>
    <property type="evidence" value="ECO:0007669"/>
    <property type="project" value="Ensembl"/>
</dbReference>
<dbReference type="GO" id="GO:2000806">
    <property type="term" value="P:positive regulation of termination of RNA polymerase II transcription, poly(A)-coupled"/>
    <property type="evidence" value="ECO:0000314"/>
    <property type="project" value="UniProtKB"/>
</dbReference>
<dbReference type="GO" id="GO:0032968">
    <property type="term" value="P:positive regulation of transcription elongation by RNA polymerase II"/>
    <property type="evidence" value="ECO:0000314"/>
    <property type="project" value="UniProtKB"/>
</dbReference>
<dbReference type="GO" id="GO:0006470">
    <property type="term" value="P:protein dephosphorylation"/>
    <property type="evidence" value="ECO:0000315"/>
    <property type="project" value="CACAO"/>
</dbReference>
<dbReference type="GO" id="GO:0050821">
    <property type="term" value="P:protein stabilization"/>
    <property type="evidence" value="ECO:0000314"/>
    <property type="project" value="UniProtKB"/>
</dbReference>
<dbReference type="GO" id="GO:0060828">
    <property type="term" value="P:regulation of canonical Wnt signaling pathway"/>
    <property type="evidence" value="ECO:0000305"/>
    <property type="project" value="ParkinsonsUK-UCL"/>
</dbReference>
<dbReference type="GO" id="GO:0042752">
    <property type="term" value="P:regulation of circadian rhythm"/>
    <property type="evidence" value="ECO:0000315"/>
    <property type="project" value="UniProtKB"/>
</dbReference>
<dbReference type="GO" id="GO:0005981">
    <property type="term" value="P:regulation of glycogen catabolic process"/>
    <property type="evidence" value="ECO:0007669"/>
    <property type="project" value="Ensembl"/>
</dbReference>
<dbReference type="GO" id="GO:0043558">
    <property type="term" value="P:regulation of translational initiation in response to stress"/>
    <property type="evidence" value="ECO:0000250"/>
    <property type="project" value="ParkinsonsUK-UCL"/>
</dbReference>
<dbReference type="GO" id="GO:0010288">
    <property type="term" value="P:response to lead ion"/>
    <property type="evidence" value="ECO:0000250"/>
    <property type="project" value="ARUK-UCL"/>
</dbReference>
<dbReference type="GO" id="GO:0001111">
    <property type="term" value="P:RNA polymerase II promoter clearance"/>
    <property type="evidence" value="ECO:0000314"/>
    <property type="project" value="UniProtKB"/>
</dbReference>
<dbReference type="GO" id="GO:0043247">
    <property type="term" value="P:telomere maintenance in response to DNA damage"/>
    <property type="evidence" value="ECO:0000314"/>
    <property type="project" value="UniProt"/>
</dbReference>
<dbReference type="CDD" id="cd07414">
    <property type="entry name" value="MPP_PP1_PPKL"/>
    <property type="match status" value="1"/>
</dbReference>
<dbReference type="FunFam" id="3.60.21.10:FF:000004">
    <property type="entry name" value="Serine/threonine-protein phosphatase"/>
    <property type="match status" value="1"/>
</dbReference>
<dbReference type="Gene3D" id="3.60.21.10">
    <property type="match status" value="1"/>
</dbReference>
<dbReference type="IDEAL" id="IID00311"/>
<dbReference type="InterPro" id="IPR004843">
    <property type="entry name" value="Calcineurin-like_PHP_ApaH"/>
</dbReference>
<dbReference type="InterPro" id="IPR029052">
    <property type="entry name" value="Metallo-depent_PP-like"/>
</dbReference>
<dbReference type="InterPro" id="IPR050341">
    <property type="entry name" value="PP1_catalytic_subunit"/>
</dbReference>
<dbReference type="InterPro" id="IPR006186">
    <property type="entry name" value="Ser/Thr-sp_prot-phosphatase"/>
</dbReference>
<dbReference type="InterPro" id="IPR031675">
    <property type="entry name" value="STPPase_N"/>
</dbReference>
<dbReference type="PANTHER" id="PTHR11668">
    <property type="entry name" value="SERINE/THREONINE PROTEIN PHOSPHATASE"/>
    <property type="match status" value="1"/>
</dbReference>
<dbReference type="PANTHER" id="PTHR11668:SF377">
    <property type="entry name" value="SERINE_THREONINE-PROTEIN PHOSPHATASE PP1-ALPHA CATALYTIC SUBUNIT"/>
    <property type="match status" value="1"/>
</dbReference>
<dbReference type="Pfam" id="PF00149">
    <property type="entry name" value="Metallophos"/>
    <property type="match status" value="1"/>
</dbReference>
<dbReference type="Pfam" id="PF16891">
    <property type="entry name" value="STPPase_N"/>
    <property type="match status" value="1"/>
</dbReference>
<dbReference type="PRINTS" id="PR00114">
    <property type="entry name" value="STPHPHTASE"/>
</dbReference>
<dbReference type="SMART" id="SM00156">
    <property type="entry name" value="PP2Ac"/>
    <property type="match status" value="1"/>
</dbReference>
<dbReference type="SUPFAM" id="SSF56300">
    <property type="entry name" value="Metallo-dependent phosphatases"/>
    <property type="match status" value="1"/>
</dbReference>
<dbReference type="PROSITE" id="PS00125">
    <property type="entry name" value="SER_THR_PHOSPHATASE"/>
    <property type="match status" value="1"/>
</dbReference>
<accession>P62136</accession>
<accession>A6NNR3</accession>
<accession>B2R908</accession>
<accession>P08129</accession>
<accession>P20653</accession>
<accession>P22802</accession>
<accession>Q07161</accession>
<sequence length="330" mass="37512">MSDSEKLNLDSIIGRLLEVQGSRPGKNVQLTENEIRGLCLKSREIFLSQPILLELEAPLKICGDIHGQYYDLLRLFEYGGFPPESNYLFLGDYVDRGKQSLETICLLLAYKIKYPENFFLLRGNHECASINRIYGFYDECKRRYNIKLWKTFTDCFNCLPIAAIVDEKIFCCHGGLSPDLQSMEQIRRIMRPTDVPDQGLLCDLLWSDPDKDVQGWGENDRGVSFTFGAEVVAKFLHKHDLDLICRAHQVVEDGYEFFAKRQLVTLFSAPNYCGEFDNAGAMMSVDETLMCSFQILKPADKNKGKYGQFSGLNPGGRPITPPRNSAKAKK</sequence>